<proteinExistence type="evidence at protein level"/>
<dbReference type="EMBL" id="X16476">
    <property type="protein sequence ID" value="CAA34497.1"/>
    <property type="status" value="ALT_INIT"/>
    <property type="molecule type" value="mRNA"/>
</dbReference>
<dbReference type="PIR" id="S05448">
    <property type="entry name" value="CHRTD1"/>
</dbReference>
<dbReference type="RefSeq" id="NP_037318.2">
    <property type="nucleotide sequence ID" value="NM_013186.3"/>
</dbReference>
<dbReference type="PDB" id="2R9R">
    <property type="method" value="X-ray"/>
    <property type="resolution" value="2.40 A"/>
    <property type="chains" value="B/H=272-304"/>
</dbReference>
<dbReference type="PDB" id="3LNM">
    <property type="method" value="X-ray"/>
    <property type="resolution" value="2.90 A"/>
    <property type="chains" value="B/D=272-304"/>
</dbReference>
<dbReference type="PDB" id="4JTA">
    <property type="method" value="X-ray"/>
    <property type="resolution" value="2.50 A"/>
    <property type="chains" value="B/Q=274-306"/>
</dbReference>
<dbReference type="PDB" id="4JTC">
    <property type="method" value="X-ray"/>
    <property type="resolution" value="2.56 A"/>
    <property type="chains" value="B/H=274-306"/>
</dbReference>
<dbReference type="PDB" id="4JTD">
    <property type="method" value="X-ray"/>
    <property type="resolution" value="2.54 A"/>
    <property type="chains" value="B/H=274-306"/>
</dbReference>
<dbReference type="PDB" id="8SD3">
    <property type="method" value="EM"/>
    <property type="resolution" value="2.95 A"/>
    <property type="chains" value="A/B/C/D=5-602"/>
</dbReference>
<dbReference type="PDB" id="8SDA">
    <property type="method" value="EM"/>
    <property type="resolution" value="3.32 A"/>
    <property type="chains" value="A/B/C/D=5-602"/>
</dbReference>
<dbReference type="PDBsum" id="2R9R"/>
<dbReference type="PDBsum" id="3LNM"/>
<dbReference type="PDBsum" id="4JTA"/>
<dbReference type="PDBsum" id="4JTC"/>
<dbReference type="PDBsum" id="4JTD"/>
<dbReference type="PDBsum" id="8SD3"/>
<dbReference type="PDBsum" id="8SDA"/>
<dbReference type="EMDB" id="EMD-40349"/>
<dbReference type="EMDB" id="EMD-40350"/>
<dbReference type="SMR" id="P15387"/>
<dbReference type="BioGRID" id="247764">
    <property type="interactions" value="6"/>
</dbReference>
<dbReference type="CORUM" id="P15387"/>
<dbReference type="FunCoup" id="P15387">
    <property type="interactions" value="385"/>
</dbReference>
<dbReference type="IntAct" id="P15387">
    <property type="interactions" value="4"/>
</dbReference>
<dbReference type="MINT" id="P15387"/>
<dbReference type="STRING" id="10116.ENSRNOP00000065961"/>
<dbReference type="BindingDB" id="P15387"/>
<dbReference type="ChEMBL" id="CHEMBL1075226"/>
<dbReference type="GuidetoPHARMACOLOGY" id="546"/>
<dbReference type="iPTMnet" id="P15387"/>
<dbReference type="PhosphoSitePlus" id="P15387"/>
<dbReference type="PaxDb" id="10116-ENSRNOP00000065961"/>
<dbReference type="ABCD" id="P15387">
    <property type="antibodies" value="8 sequenced antibodies"/>
</dbReference>
<dbReference type="Ensembl" id="ENSRNOT00000074023.3">
    <property type="protein sequence ID" value="ENSRNOP00000065961.3"/>
    <property type="gene ID" value="ENSRNOG00000046949.3"/>
</dbReference>
<dbReference type="GeneID" id="25736"/>
<dbReference type="KEGG" id="rno:25736"/>
<dbReference type="UCSC" id="RGD:2954">
    <property type="organism name" value="rat"/>
</dbReference>
<dbReference type="AGR" id="RGD:2954"/>
<dbReference type="CTD" id="3745"/>
<dbReference type="RGD" id="2954">
    <property type="gene designation" value="Kcnb1"/>
</dbReference>
<dbReference type="eggNOG" id="KOG3713">
    <property type="taxonomic scope" value="Eukaryota"/>
</dbReference>
<dbReference type="GeneTree" id="ENSGT00940000154899"/>
<dbReference type="HOGENOM" id="CLU_011722_2_1_1"/>
<dbReference type="InParanoid" id="P15387"/>
<dbReference type="OMA" id="ASIHQYI"/>
<dbReference type="OrthoDB" id="296522at2759"/>
<dbReference type="PhylomeDB" id="P15387"/>
<dbReference type="Reactome" id="R-RNO-1296072">
    <property type="pathway name" value="Voltage gated Potassium channels"/>
</dbReference>
<dbReference type="Reactome" id="R-RNO-381676">
    <property type="pathway name" value="Glucagon-like Peptide-1 (GLP1) regulates insulin secretion"/>
</dbReference>
<dbReference type="PRO" id="PR:P15387"/>
<dbReference type="Proteomes" id="UP000002494">
    <property type="component" value="Chromosome 3"/>
</dbReference>
<dbReference type="GO" id="GO:0016324">
    <property type="term" value="C:apical plasma membrane"/>
    <property type="evidence" value="ECO:0000315"/>
    <property type="project" value="RGD"/>
</dbReference>
<dbReference type="GO" id="GO:0030424">
    <property type="term" value="C:axon"/>
    <property type="evidence" value="ECO:0000314"/>
    <property type="project" value="UniProtKB"/>
</dbReference>
<dbReference type="GO" id="GO:0009986">
    <property type="term" value="C:cell surface"/>
    <property type="evidence" value="ECO:0000314"/>
    <property type="project" value="RGD"/>
</dbReference>
<dbReference type="GO" id="GO:0098981">
    <property type="term" value="C:cholinergic synapse"/>
    <property type="evidence" value="ECO:0000314"/>
    <property type="project" value="SynGO"/>
</dbReference>
<dbReference type="GO" id="GO:0030425">
    <property type="term" value="C:dendrite"/>
    <property type="evidence" value="ECO:0000314"/>
    <property type="project" value="UniProtKB"/>
</dbReference>
<dbReference type="GO" id="GO:0032590">
    <property type="term" value="C:dendrite membrane"/>
    <property type="evidence" value="ECO:0000314"/>
    <property type="project" value="RGD"/>
</dbReference>
<dbReference type="GO" id="GO:0016328">
    <property type="term" value="C:lateral plasma membrane"/>
    <property type="evidence" value="ECO:0000314"/>
    <property type="project" value="RGD"/>
</dbReference>
<dbReference type="GO" id="GO:0043025">
    <property type="term" value="C:neuronal cell body"/>
    <property type="evidence" value="ECO:0000314"/>
    <property type="project" value="RGD"/>
</dbReference>
<dbReference type="GO" id="GO:0032809">
    <property type="term" value="C:neuronal cell body membrane"/>
    <property type="evidence" value="ECO:0000314"/>
    <property type="project" value="UniProtKB"/>
</dbReference>
<dbReference type="GO" id="GO:0043204">
    <property type="term" value="C:perikaryon"/>
    <property type="evidence" value="ECO:0000314"/>
    <property type="project" value="UniProtKB"/>
</dbReference>
<dbReference type="GO" id="GO:0048471">
    <property type="term" value="C:perinuclear region of cytoplasm"/>
    <property type="evidence" value="ECO:0000314"/>
    <property type="project" value="RGD"/>
</dbReference>
<dbReference type="GO" id="GO:0005886">
    <property type="term" value="C:plasma membrane"/>
    <property type="evidence" value="ECO:0000314"/>
    <property type="project" value="UniProtKB"/>
</dbReference>
<dbReference type="GO" id="GO:0045211">
    <property type="term" value="C:postsynaptic membrane"/>
    <property type="evidence" value="ECO:0000314"/>
    <property type="project" value="RGD"/>
</dbReference>
<dbReference type="GO" id="GO:0099634">
    <property type="term" value="C:postsynaptic specialization membrane"/>
    <property type="evidence" value="ECO:0000314"/>
    <property type="project" value="SynGO"/>
</dbReference>
<dbReference type="GO" id="GO:1990635">
    <property type="term" value="C:proximal dendrite"/>
    <property type="evidence" value="ECO:0000314"/>
    <property type="project" value="RGD"/>
</dbReference>
<dbReference type="GO" id="GO:0042383">
    <property type="term" value="C:sarcolemma"/>
    <property type="evidence" value="ECO:0007669"/>
    <property type="project" value="UniProtKB-SubCell"/>
</dbReference>
<dbReference type="GO" id="GO:0008076">
    <property type="term" value="C:voltage-gated potassium channel complex"/>
    <property type="evidence" value="ECO:0000314"/>
    <property type="project" value="UniProtKB"/>
</dbReference>
<dbReference type="GO" id="GO:0005251">
    <property type="term" value="F:delayed rectifier potassium channel activity"/>
    <property type="evidence" value="ECO:0000314"/>
    <property type="project" value="UniProtKB"/>
</dbReference>
<dbReference type="GO" id="GO:0015271">
    <property type="term" value="F:outward rectifier potassium channel activity"/>
    <property type="evidence" value="ECO:0000315"/>
    <property type="project" value="RGD"/>
</dbReference>
<dbReference type="GO" id="GO:0015459">
    <property type="term" value="F:potassium channel regulator activity"/>
    <property type="evidence" value="ECO:0000318"/>
    <property type="project" value="GO_Central"/>
</dbReference>
<dbReference type="GO" id="GO:0046982">
    <property type="term" value="F:protein heterodimerization activity"/>
    <property type="evidence" value="ECO:0000314"/>
    <property type="project" value="UniProtKB"/>
</dbReference>
<dbReference type="GO" id="GO:0000149">
    <property type="term" value="F:SNARE binding"/>
    <property type="evidence" value="ECO:0000353"/>
    <property type="project" value="UniProtKB"/>
</dbReference>
<dbReference type="GO" id="GO:0044325">
    <property type="term" value="F:transmembrane transporter binding"/>
    <property type="evidence" value="ECO:0000353"/>
    <property type="project" value="UniProtKB"/>
</dbReference>
<dbReference type="GO" id="GO:0005249">
    <property type="term" value="F:voltage-gated potassium channel activity"/>
    <property type="evidence" value="ECO:0000314"/>
    <property type="project" value="MGI"/>
</dbReference>
<dbReference type="GO" id="GO:0001508">
    <property type="term" value="P:action potential"/>
    <property type="evidence" value="ECO:0000314"/>
    <property type="project" value="UniProtKB"/>
</dbReference>
<dbReference type="GO" id="GO:0071277">
    <property type="term" value="P:cellular response to calcium ion"/>
    <property type="evidence" value="ECO:0000314"/>
    <property type="project" value="RGD"/>
</dbReference>
<dbReference type="GO" id="GO:0071333">
    <property type="term" value="P:cellular response to glucose stimulus"/>
    <property type="evidence" value="ECO:0000250"/>
    <property type="project" value="UniProtKB"/>
</dbReference>
<dbReference type="GO" id="GO:0031669">
    <property type="term" value="P:cellular response to nutrient levels"/>
    <property type="evidence" value="ECO:0000314"/>
    <property type="project" value="UniProtKB"/>
</dbReference>
<dbReference type="GO" id="GO:0045163">
    <property type="term" value="P:clustering of voltage-gated potassium channels"/>
    <property type="evidence" value="ECO:0000314"/>
    <property type="project" value="RGD"/>
</dbReference>
<dbReference type="GO" id="GO:0042593">
    <property type="term" value="P:glucose homeostasis"/>
    <property type="evidence" value="ECO:0000250"/>
    <property type="project" value="UniProtKB"/>
</dbReference>
<dbReference type="GO" id="GO:0007215">
    <property type="term" value="P:glutamate receptor signaling pathway"/>
    <property type="evidence" value="ECO:0000314"/>
    <property type="project" value="UniProtKB"/>
</dbReference>
<dbReference type="GO" id="GO:0046676">
    <property type="term" value="P:negative regulation of insulin secretion"/>
    <property type="evidence" value="ECO:0000250"/>
    <property type="project" value="UniProtKB"/>
</dbReference>
<dbReference type="GO" id="GO:0045956">
    <property type="term" value="P:positive regulation of calcium ion-dependent exocytosis"/>
    <property type="evidence" value="ECO:0000314"/>
    <property type="project" value="UniProtKB"/>
</dbReference>
<dbReference type="GO" id="GO:0033605">
    <property type="term" value="P:positive regulation of catecholamine secretion"/>
    <property type="evidence" value="ECO:0000314"/>
    <property type="project" value="UniProtKB"/>
</dbReference>
<dbReference type="GO" id="GO:1900454">
    <property type="term" value="P:positive regulation of long-term synaptic depression"/>
    <property type="evidence" value="ECO:0000250"/>
    <property type="project" value="UniProtKB"/>
</dbReference>
<dbReference type="GO" id="GO:0010701">
    <property type="term" value="P:positive regulation of norepinephrine secretion"/>
    <property type="evidence" value="ECO:0000314"/>
    <property type="project" value="UniProtKB"/>
</dbReference>
<dbReference type="GO" id="GO:0090314">
    <property type="term" value="P:positive regulation of protein targeting to membrane"/>
    <property type="evidence" value="ECO:0000314"/>
    <property type="project" value="UniProtKB"/>
</dbReference>
<dbReference type="GO" id="GO:0097623">
    <property type="term" value="P:potassium ion export across plasma membrane"/>
    <property type="evidence" value="ECO:0000315"/>
    <property type="project" value="RGD"/>
</dbReference>
<dbReference type="GO" id="GO:0071805">
    <property type="term" value="P:potassium ion transmembrane transport"/>
    <property type="evidence" value="ECO:0000314"/>
    <property type="project" value="UniProtKB"/>
</dbReference>
<dbReference type="GO" id="GO:0006813">
    <property type="term" value="P:potassium ion transport"/>
    <property type="evidence" value="ECO:0000314"/>
    <property type="project" value="UniProtKB"/>
</dbReference>
<dbReference type="GO" id="GO:0051260">
    <property type="term" value="P:protein homooligomerization"/>
    <property type="evidence" value="ECO:0007669"/>
    <property type="project" value="InterPro"/>
</dbReference>
<dbReference type="GO" id="GO:0072659">
    <property type="term" value="P:protein localization to plasma membrane"/>
    <property type="evidence" value="ECO:0000314"/>
    <property type="project" value="UniProtKB"/>
</dbReference>
<dbReference type="GO" id="GO:0098900">
    <property type="term" value="P:regulation of action potential"/>
    <property type="evidence" value="ECO:0000250"/>
    <property type="project" value="UniProtKB"/>
</dbReference>
<dbReference type="GO" id="GO:2000671">
    <property type="term" value="P:regulation of motor neuron apoptotic process"/>
    <property type="evidence" value="ECO:0000314"/>
    <property type="project" value="UniProtKB"/>
</dbReference>
<dbReference type="GO" id="GO:0048678">
    <property type="term" value="P:response to axon injury"/>
    <property type="evidence" value="ECO:0000270"/>
    <property type="project" value="RGD"/>
</dbReference>
<dbReference type="GO" id="GO:1902065">
    <property type="term" value="P:response to L-glutamate"/>
    <property type="evidence" value="ECO:0000270"/>
    <property type="project" value="RGD"/>
</dbReference>
<dbReference type="GO" id="GO:0006904">
    <property type="term" value="P:vesicle docking involved in exocytosis"/>
    <property type="evidence" value="ECO:0000314"/>
    <property type="project" value="UniProtKB"/>
</dbReference>
<dbReference type="CDD" id="cd18412">
    <property type="entry name" value="BTB_POZ_KCNB2"/>
    <property type="match status" value="1"/>
</dbReference>
<dbReference type="FunFam" id="1.10.287.70:FF:000034">
    <property type="entry name" value="Potassium voltage-gated channel subfamily B member"/>
    <property type="match status" value="1"/>
</dbReference>
<dbReference type="FunFam" id="1.20.120.350:FF:000018">
    <property type="entry name" value="Potassium voltage-gated channel subfamily B member"/>
    <property type="match status" value="1"/>
</dbReference>
<dbReference type="FunFam" id="3.30.710.10:FF:000010">
    <property type="entry name" value="Potassium voltage-gated channel subfamily B member"/>
    <property type="match status" value="1"/>
</dbReference>
<dbReference type="Gene3D" id="1.10.287.70">
    <property type="match status" value="1"/>
</dbReference>
<dbReference type="Gene3D" id="3.30.710.10">
    <property type="entry name" value="Potassium Channel Kv1.1, Chain A"/>
    <property type="match status" value="1"/>
</dbReference>
<dbReference type="Gene3D" id="1.20.120.350">
    <property type="entry name" value="Voltage-gated potassium channels. Chain C"/>
    <property type="match status" value="1"/>
</dbReference>
<dbReference type="InterPro" id="IPR000210">
    <property type="entry name" value="BTB/POZ_dom"/>
</dbReference>
<dbReference type="InterPro" id="IPR005821">
    <property type="entry name" value="Ion_trans_dom"/>
</dbReference>
<dbReference type="InterPro" id="IPR003968">
    <property type="entry name" value="K_chnl_volt-dep_Kv"/>
</dbReference>
<dbReference type="InterPro" id="IPR003973">
    <property type="entry name" value="K_chnl_volt-dep_Kv2"/>
</dbReference>
<dbReference type="InterPro" id="IPR004350">
    <property type="entry name" value="K_chnl_volt-dep_Kv2.1"/>
</dbReference>
<dbReference type="InterPro" id="IPR011333">
    <property type="entry name" value="SKP1/BTB/POZ_sf"/>
</dbReference>
<dbReference type="InterPro" id="IPR003131">
    <property type="entry name" value="T1-type_BTB"/>
</dbReference>
<dbReference type="InterPro" id="IPR028325">
    <property type="entry name" value="VG_K_chnl"/>
</dbReference>
<dbReference type="InterPro" id="IPR027359">
    <property type="entry name" value="Volt_channel_dom_sf"/>
</dbReference>
<dbReference type="PANTHER" id="PTHR11537:SF63">
    <property type="entry name" value="POTASSIUM VOLTAGE-GATED CHANNEL SUBFAMILY B MEMBER 1"/>
    <property type="match status" value="1"/>
</dbReference>
<dbReference type="PANTHER" id="PTHR11537">
    <property type="entry name" value="VOLTAGE-GATED POTASSIUM CHANNEL"/>
    <property type="match status" value="1"/>
</dbReference>
<dbReference type="Pfam" id="PF02214">
    <property type="entry name" value="BTB_2"/>
    <property type="match status" value="1"/>
</dbReference>
<dbReference type="Pfam" id="PF00520">
    <property type="entry name" value="Ion_trans"/>
    <property type="match status" value="1"/>
</dbReference>
<dbReference type="Pfam" id="PF03521">
    <property type="entry name" value="Kv2channel"/>
    <property type="match status" value="2"/>
</dbReference>
<dbReference type="PRINTS" id="PR00169">
    <property type="entry name" value="KCHANNEL"/>
</dbReference>
<dbReference type="PRINTS" id="PR01514">
    <property type="entry name" value="KV21CHANNEL"/>
</dbReference>
<dbReference type="PRINTS" id="PR01491">
    <property type="entry name" value="KVCHANNEL"/>
</dbReference>
<dbReference type="PRINTS" id="PR01495">
    <property type="entry name" value="SHABCHANNEL"/>
</dbReference>
<dbReference type="SMART" id="SM00225">
    <property type="entry name" value="BTB"/>
    <property type="match status" value="1"/>
</dbReference>
<dbReference type="SUPFAM" id="SSF54695">
    <property type="entry name" value="POZ domain"/>
    <property type="match status" value="1"/>
</dbReference>
<dbReference type="SUPFAM" id="SSF81324">
    <property type="entry name" value="Voltage-gated potassium channels"/>
    <property type="match status" value="1"/>
</dbReference>
<gene>
    <name evidence="82" type="primary">Kcnb1</name>
</gene>
<sequence length="857" mass="95637">MPAGMTKHGSRSTSSLPPEPMEIVRSKACSRRVRLNVGGLAHEVLWRTLDRLPRTRLGKLRDCNTHDSLLQVCDDYSLEDNEYFFDRHPGAFTSILNFYRTGRLHMMEEMCALSFSQELDYWGIDEIYLESCCQARYHQKKEQMNEELKREAETLREREGEEFDNTCCAEKRKKLWDLLEKPNSSVAAKILAIISIMFIVLSTIALSLNTLPELQSLDEFGQSTDNPQLAHVEAVCIAWFTMEYLLRFLSSPKKWKFFKGPLNAIDLLAILPYYVTIFLTESNKSVLQFQNVRRVVQIFRIMRILRILKLARHSTGLQSLGFTLRRSYNELGLLILFLAMGIMIFSSLVFFAEKDEDDTKFKSIPASFWWATITMTTVGYGDIYPKTLLGKIVGGLCCIAGVLVIALPIPIIVNNFSEFYKEQKRQEKAIKRREALERAKRNGSIVSMNMKDAFARSIEMMDIVVEKNGESIAKKDKVQDNHLSPNKWKWTKRALSETSSSKSFETKEQGSPEKARSSSSPQHLNVQQLEDMYSKMAKTQSQPILNTKEMAPQSKPPEELEMSSMPSPVAPLPARTEGVIDMRSMSSIDSFISCATDFPEATRFSHSPLASLSSKAGSSTAPEVGWRGALGASGGRLTETNPIPETSRSGFFVESPRSSMKTNNPLKLRALKVNFVEGDPTPLLPSLGLYHDPLRNRGGAAAAVAGLECASLLDKPVLSPESSIYTTASARTPPRSPEKHTAIAFNFEAGVHHYIDTDTDDEGQLLYSVDSSPPKSLHGSTSPKFSTGARTEKNHFESSPLPTSPKFLRPNCVYSSEGLTGKGPGAQEKCKLENHTPPDVHMLPGGGAHGSTRDQSI</sequence>
<protein>
    <recommendedName>
        <fullName evidence="3">Potassium voltage-gated channel subfamily B member 1</fullName>
    </recommendedName>
    <alternativeName>
        <fullName evidence="78">Delayed rectifier potassium channel 1</fullName>
        <shortName evidence="78">DRK1</shortName>
    </alternativeName>
    <alternativeName>
        <fullName>Voltage-gated potassium channel subunit Kv2.1</fullName>
    </alternativeName>
</protein>
<comment type="function">
    <text evidence="2 6 7 8 10 12 13 14 15 17 18 19 20 21 22 24 25 26 27 30 31 32 36 37 40 43 44 45 47 49 50 51 54 55 57 60 61 64 67 68 69 70 71 72 73 75 76 77">Voltage-gated potassium channel that mediates transmembrane potassium transport in excitable membranes, primarily in the brain, but also in the pancreas and cardiovascular system. Contributes to the regulation of the action potential (AP) repolarization, duration and frequency of repetitive AP firing in neurons, muscle cells and endocrine cells and plays a role in homeostatic attenuation of electrical excitability throughout the brain (PubMed:10024359, PubMed:10618149, PubMed:12451110, PubMed:17379638, PubMed:19276663, PubMed:23878373). Also plays a role in the regulation of exocytosis independently of its electrical function (PubMed:20484665). Forms tetrameric potassium-selective channels through which potassium ions pass in accordance with their electrochemical gradient. The channel alternates between opened and closed conformations in response to the voltage difference across the membrane. Homotetrameric channels mediate a delayed-rectifier voltage-dependent outward potassium current that display rapid activation and slow inactivation in response to membrane depolarization (PubMed:12560340, PubMed:1875913, PubMed:2206531, PubMed:2770868, PubMed:8083226, PubMed:8978827, PubMed:9351973, PubMed:9565597). Can form functional homotetrameric and heterotetrameric channels that contain variable proportions of KCNB2; channel properties depend on the type of alpha subunits that are part of the channel (PubMed:20202934). Can also form functional heterotetrameric channels with other alpha subunits that are non-conducting when expressed alone, such as KCNF1, KCNG1, KCNG3, KCNG4, KCNH1, KCNH2, KCNS1, KCNS2, KCNS3 and KCNV1, creating a functionally diverse range of channel complexes (PubMed:8670833, PubMed:8980147, PubMed:9079713, PubMed:9305895, PubMed:9362476, PubMed:9696692). Heterotetrameric channel activity formed with KCNS3 show increased current amplitude with the threshold for action potential activation shifted towards more negative values in hypoxic-treated pulmonary artery smooth muscle cells (PubMed:9362476). Channel properties are also modulated by cytoplasmic ancillary beta subunits such as AMIGO1, KCNE1, KCNE2 and KCNE3, slowing activation and inactivation rate of the delayed rectifier potassium channels (PubMed:12954870, PubMed:19219384). In vivo, membranes probably contain a mixture of heteromeric potassium channel complexes, making it difficult to assign currents observed in intact tissues to any particular potassium channel family member. Major contributor to the slowly inactivating delayed-rectifier voltage-gated potassium current in neurons of the central nervous system, sympathetic ganglion neurons, neuroendocrine cells, pancreatic beta cells, cardiomyocytes and smooth muscle cells (PubMed:10024359, PubMed:10414968, PubMed:10618149, PubMed:11463864, PubMed:12127166, PubMed:12403834, PubMed:12451110, PubMed:12621036, PubMed:12807875, PubMed:12832499, PubMed:12954870, PubMed:15195093, PubMed:15322114, PubMed:16407566, PubMed:17301173, PubMed:17379638, PubMed:18167541, PubMed:18463252, PubMed:19276663, PubMed:20484665, PubMed:21518833, PubMed:22411134, PubMed:23878373, PubMed:9362476, PubMed:9616203). Mediates the major part of the somatodendritic delayed-rectifier potassium current in hippocampal and cortical pyramidal neurons and sympathetic superior cervical ganglion (CGC) neurons that acts to slow down periods of firing, especially during high frequency stimulation (PubMed:10618149, PubMed:12451110, PubMed:16319318, PubMed:16917065, PubMed:17379638, PubMed:19276663, PubMed:23878373). Plays a role in the induction of long-term potentiation (LTP) of neuron excitability in the CA3 layer of the hippocampus (By similarity). Contributes to the regulation of glucose-induced action potential amplitude and duration in pancreatic beta cells, hence limiting calcium influx and insulin secretion (PubMed:11463864). Plays a role in the regulation of resting membrane potential and contraction in hypoxia-treated pulmonary artery smooth muscle cells (PubMed:9616203). May contribute to the regulation of the duration of both the action potential of cardiomyocytes and the heart ventricular repolarization QT interval (By similarity). Contributes to the pronounced pro-apoptotic potassium current surge during neuronal apoptotic cell death in response to oxidative injury (PubMed:12832499, PubMed:16273079, PubMed:17360683, PubMed:19077057, PubMed:19622611, PubMed:24928958). May confer neuroprotection in response to hypoxia/ischemic insults by suppressing pyramidal neurons hyperexcitability in hippocampal and cortical regions (PubMed:16319318). Promotes trafficking of KCNG3, KCNH1 and KCNH2 to the cell surface membrane, presumably by forming heterotetrameric channels with these subunits (By similarity). Plays a role in the calcium-dependent recruitment and release of fusion-competent vesicles from the soma of neurons, neuroendocrine and glucose-induced pancreatic beta cells by binding key components of the fusion machinery in a pore-independent manner (PubMed:11463864, PubMed:17301173, PubMed:18167541, PubMed:20484665, PubMed:22411134).</text>
</comment>
<comment type="catalytic activity">
    <reaction evidence="11 15 40 54 61 62 64 68 72 73 75">
        <text>K(+)(in) = K(+)(out)</text>
        <dbReference type="Rhea" id="RHEA:29463"/>
        <dbReference type="ChEBI" id="CHEBI:29103"/>
    </reaction>
</comment>
<comment type="activity regulation">
    <text evidence="11 40 61 62 64 73 80 81">Inhibited by 42 nM hanatoxin 1 (HaTx1), a spider venom toxin of the tarantula G.spatulata (PubMed:7576642). Inhibited by 100 nM stromatoxin 1 (ScTx1), a spider venom toxin of the tarantula S.calceata (PubMed:12065754). Modestly sensitive to millimolar levels of tetraethylammonium (TEA) and 4-aminopyridine (4-AP) (PubMed:1875913, PubMed:2770868, PubMed:8083226, PubMed:9362476). Completely insensitive to toxins such as dendrotoxin (DTX) and charybdotoxin (CTX) (PubMed:9362476).</text>
</comment>
<comment type="biophysicochemical properties">
    <kinetics>
        <text evidence="54 61 64 80 81">Homotetrameric channels expressed in xenopus oocytes or in mammalian non-neuronal cells display delayed-rectifier voltage-dependent potassium currents which are activated during membrane depolarization, i.e within a risetime of about 20 msec (PubMed:2770868). After that, inactivate very slowly, i.e within more than 5 sec (PubMed:2206531, PubMed:8083226). Their activation requires low threshold potentials of about -20 to -30 mV, with a midpoint activation at about 10 mV (PubMed:2206531, PubMed:2770868, PubMed:8083226). For inactivation, the voltage at half-maximal amplitude is about -20 mV (PubMed:2206531, PubMed:8083226). The time constant for recovery after inactivation is about 1.6 sec. Channels have an unitary conductance of about 8 pS (PubMed:10414301, PubMed:15858231). The voltage-dependence of activation and inactivation and other channel characteristics vary depending on the experimental conditions, the expression system, the presence or absence of ancillary subunits and post-translational modifications.</text>
    </kinetics>
</comment>
<comment type="subunit">
    <text evidence="2 3 13 15 17 18 20 30 36 37 38 43 44 48 49 50 53 55 59 60 67 69 70 71 73 75 77">Homotetramer or heterotetramer with KCNB2 (PubMed:20202934). Heterotetramer with non-conducting channel-forming alpha subunits such as KCNF1, KCNG1, KCNG3, KCNG4, KCNH1, KCNH2, KCNS1, KCNS2, KCNS3 and KCNV1 (PubMed:8670833, PubMed:8980147, PubMed:9079713, PubMed:9305895, PubMed:9362476, PubMed:9696692). Channel activity is regulated by association with ancillary beta subunits such as AMIGO1, KCNE1, KCNE2 and KCNE3 (PubMed:12954870, PubMed:19219384). Interacts with KCNV2 (By similarity). Self-associates (via N-terminus and C-terminus); self-association is required to regulate trafficking, gating and C-terminal phosphorylation-dependent modulation of the channel (PubMed:12560340, PubMed:18463252, PubMed:19690160). Interacts (via C-terminus) with STX1A (via C-terminus); this decreases the rate of channel activation and increases the rate of channel inactivation in pancreatic beta cells, also induces neuronal apoptosis in response to oxidative injury as well as pore-independent enhancement of exocytosis in neuroendocrine cells, chromaffin cells, pancreatic beta cells and from the soma of dorsal root ganglia (DRG) neurons (PubMed:12621036, PubMed:12807875, PubMed:17301173, PubMed:18167541, PubMed:19077057, PubMed:20484665, PubMed:22411134, PubMed:24928958). Interacts (via N-terminus) with SNAP25; this decreases the rate of channel inactivation in pancreatic beta cells and also increases interaction during neuronal apoptosis in a N-methyl-D-aspartate receptor (NMDAR)-dependent manner (PubMed:12403834, PubMed:12807875, PubMed:19077057). Interacts (via N-terminus and C-terminus) with VAMP2 (via N-terminus); stimulates channel inactivation rate (PubMed:18542995, PubMed:19077057, PubMed:19690160). Interacts with CREB1; this promotes channel acetylation in response to stimulation by incretin hormones (PubMed:21818121). Interacts (via N-terminus and C-terminus) with MYL12B (PubMed:24569993). Interacts (via N-terminus) with PIAS3; this increases the number of functional channels at the cell surface (PubMed:9565597). Interacts with SUMO1. Interacts (via phosphorylated form) with PTPRE; this reduces phosphorylation and channel activity in heterologous cells (By similarity). Interacts (via phosphorylated FFAT motif) with VAPA and VAPB (By similarity).</text>
</comment>
<comment type="subcellular location">
    <subcellularLocation>
        <location evidence="6 7 8 9 12 13 14 15 16 17 18 19 20 21 22 23 24 25 26 28 29 30 31 32 34 35 36 37 38 41 43 44 45 48 49 50 51 52 55 57 58 59 60 63 64 65 66 67 68 69 70 71 73 74 75 76 77">Cell membrane</location>
    </subcellularLocation>
    <subcellularLocation>
        <location evidence="6 8 9 20 21 25 26 28 32 35 37 41 43 46 49 51 52 56 57 58 59 63 65 68 74">Perikaryon</location>
    </subcellularLocation>
    <subcellularLocation>
        <location evidence="6 8 9 20 21 25 26 32 35 37 41 43 49 51 52 56 57 58 59 63 65 74">Cell projection</location>
        <location evidence="6 8 9 20 21 25 26 32 35 37 41 43 49 51 52 56 57 58 59 63 65 74">Dendrite</location>
    </subcellularLocation>
    <subcellularLocation>
        <location evidence="41 56 58">Cell projection</location>
        <location evidence="41 56 58">Axon</location>
    </subcellularLocation>
    <subcellularLocation>
        <location evidence="74">Postsynaptic cell membrane</location>
    </subcellularLocation>
    <subcellularLocation>
        <location evidence="74">Synapse</location>
    </subcellularLocation>
    <subcellularLocation>
        <location evidence="66">Synapse</location>
        <location evidence="66">Synaptosome</location>
    </subcellularLocation>
    <subcellularLocation>
        <location evidence="66">Membrane</location>
        <topology>Multi-pass membrane protein</topology>
    </subcellularLocation>
    <subcellularLocation>
        <location evidence="68">Lateral cell membrane</location>
    </subcellularLocation>
    <subcellularLocation>
        <location evidence="35">Cell membrane</location>
        <location evidence="35">Sarcolemma</location>
    </subcellularLocation>
    <text evidence="2 3 6 9 16 18 20 21 23 24 25 26 28 30 32 34 35 37 41 43 44 46 49 51 56 57 58 59 66 68 74">Localizes to high-density somatodendritic clusters and non-clustered sites on the surface of neocortical and hippocampal pyramidal neurons in a cortical actin cytoskeleton-dependent manner (PubMed:10024359, PubMed:10719893, PubMed:15195093, PubMed:16319318, PubMed:16407566, PubMed:16988031, PubMed:17379638, PubMed:17606996, PubMed:18463252, PubMed:19014551, PubMed:1961744, PubMed:22648171, PubMed:23878373, PubMed:24477962, PubMed:24569993, PubMed:8978827, PubMed:9522360). Also localizes to high-density clusters in the axon initial segment (AIS), at ankyrin-G-deficient sites, on the surface of neocortical and hippocampal pyramidal neurons (PubMed:17379638, PubMed:19014551, PubMed:22648171, PubMed:24477962). KCNB1-containing AIS clusters localize either in close apposition to smooth endoplasmic reticulum cisternal organelles or with GABA-A receptor-containing synapses of hippocampal and cortical pyramidal neurons, respectively (PubMed:24477962). Localizes to high-density clusters on the cell surface of atrial and ventricular myocytes and at the lateral plasma membrane in epithelial cells (PubMed:17965280, PubMed:8978827). Localizes both to the axial and transverse tubules (T tubule) and sarcolemma in ventricular myocytes (PubMed:17965280). Associated with lipid raft domains (PubMed:15855232). In cortical neurons, apoptotic injuries induce de novo plasma membrane insertion in a SNARE-dependent manner causing an apoptotic potassium current surge (PubMed:16273079, PubMed:19077057).</text>
</comment>
<comment type="tissue specificity">
    <text evidence="6 7 8 10 13 14 19 20 22 25 29 32 33 35 41 42 44 46 49 55 58 63 65 66 73 74 76">Expressed in brain (PubMed:12954870, PubMed:1740690, PubMed:1961744, PubMed:7623158, PubMed:8508921). Expressed in the hippocampus, cerebral cortex, cerebellum, thalamus, hypothalamus, olfactory bulb, corpus striatum and medial hebenula (PubMed:10414301, PubMed:16319318, PubMed:8463836). Expressed in pancreatic islets (PubMed:12403834). Expressed in heart and skeletal muscle (PubMed:10414301, PubMed:1740690, PubMed:19219384). Levels remain constant throughout postnatal development (PubMed:17192433). Expressed in neocortical pyramidal neurons and inhibitory interneurons (PubMed:10618149, PubMed:12832499, PubMed:17192433, PubMed:17379638, PubMed:19014551, PubMed:1961744, PubMed:20202934, PubMed:24477962, PubMed:9522360). Expressed in the superior cervical ganglion (SCG) neurons (PubMed:12451110). Expressed in globus pallidus neurons (PubMed:10414968). Expressed in pancreatic beta cells (PubMed:11463864, PubMed:22411134). Expressed in cardiomyocytes (PubMed:17965280). Expressed in arterial smooth muscle, alveolar epithelium and parenchyma (at protein level) (PubMed:15322114, PubMed:9362476, PubMed:9616203). Expressed in brain, heart, lung, liver, colon, kidney and adrenal gland (PubMed:19074135, PubMed:8508921, PubMed:9362476). Expressed in pyramidal cells of the cerebral cortex, in Purkinje and granule cells of the cerebellum (PubMed:8463836). Expressed in CA1-CA3 pyramidal cells, dentate granule cells and interneurons of the hippocampus (PubMed:10024359, PubMed:7623158). Expressed in pulmonary artery (PA) smooth muscle cells (PubMed:9362476).</text>
</comment>
<comment type="developmental stage">
    <text evidence="66">Expressed in embryonic brain at 14 dpc, and thereafter (at protein level) (PubMed:8508921). Expressed in embryonic brain at 14 dpc, and thereafter (PubMed:8508921).</text>
</comment>
<comment type="induction">
    <text evidence="22">Down-regulated by angiotensin II in a NFATC3-dependent manner (PubMed:15322114).</text>
</comment>
<comment type="domain">
    <text evidence="1">The transmembrane segment S4 functions as a voltage-sensor and is characterized by a series of positively charged amino acids at every third position. Channel opening and closing is effected by a conformation change that affects the position and orientation of the voltage-sensor paddle formed by S3 and S4 within the membrane. A transmembrane electric field that is positive inside would push the positively charged S4 segment outwards, thereby opening the pore, while a field that is negative inside would pull the S4 segment inwards and close the pore. Changes in the position and orientation of S4 are then transmitted to the activation gate formed by the inner helix bundle via the S4-S5 linker region.</text>
</comment>
<comment type="domain">
    <text evidence="3 9 15 20 26 37 44 48 68">The N-terminal and C-terminal cytoplasmic regions mediate homooligomerization; self-association is required to regulate trafficking, gating and C-terminal phosphorylation-dependent modulation of the channel (PubMed:12560340, PubMed:18463252, PubMed:19690160). The N-terminal cytoplasmic region is important for interaction with other channel-forming alpha subunits and with ancillary beta subunits (PubMed:12954870, PubMed:19219384). The C-terminus is necessary and sufficient for the restricted localization to, and clustering within, both in soma and proximal portions of dendrite of neurons and in lateral membrane of non-neuronal polarized cells (PubMed:10719893, PubMed:8978827). The C-terminus is both necessary and sufficient as a mediator of cholinergic and calcium-stimulated modulation of channel cell membrane clustering localization and activity in hippocampal neurons (PubMed:16407566).</text>
</comment>
<comment type="domain">
    <text evidence="3">The FFAT motif is involved in the interaction with VAPA and VAPB and its phosphorylation regulates these interactions.</text>
</comment>
<comment type="PTM">
    <text evidence="2 3 16 21 25 26 27 29 31 37 39 47 52 53 58 64 72">Phosphorylated (PubMed:15195093, PubMed:16319318, PubMed:16407566, PubMed:18463252, PubMed:8083226). Differential C-terminal phosphorylation on a subset of serines allows graded activity-dependent regulation of channel gating in hippocampal neurons (PubMed:16917065, PubMed:17192433, PubMed:9351973). Ser-607 and Tyr-128 are significant sites of voltage-gated regulation through phosphorylation/dephosphorylation activities (PubMed:12615930, PubMed:17192433). Tyr-128 can be phosphorylated by Src and dephosphorylated by cytoplasmic form of the phosphatase PTPRE isoform 2 (PubMed:12615930). CDK5-induced Ser-607 phosphorylation increases in response to acute blockade of neuronal activity (PubMed:21712386). Phosphorylated on Tyr-128 by Src and on Ser-804 by MAPK14/P38MAPK; phosphorylations are necessary and sufficient for an increase in plasma membrane insertion, apoptotic potassium current surge and completion of the neuronal cell death program (PubMed:17360683, PubMed:19622611). Phosphorylated on Ser-520, Ser-607, Ser-655 and Ser-804 by CDK5; phosphorylation is necessary for KCNB1 channel clustering formation (PubMed:21712386). The Ser-607 phosphorylation state differs between KCNB1-containing clusters on the proximal and distal portions of the axon initial segment (AIS) (PubMed:24477962). Highly phosphorylated on serine residues in the C-terminal cytoplasmic tail in resting neurons (PubMed:16917065, PubMed:9351973). Phosphorylated in pancreatic beta cells in response to incretin hormones stimulation in a PKA- and RPS6KA5/MSK1-dependent signaling pathway, promoting beta cell survival (PubMed:21818121). Phosphorylation on Ser-567 is reduced during postnatal development with low levels at P2 and P5; levels then increase to reach adult levels by P14 (PubMed:17192433). Phosphorylation on Ser-457, Ser-541, Ser-567, Ser-607, Ser-655 and Ser-719 as well as the N-terminal Ser-15 are sensitive to calcineurin-mediated dephosphorylation contributing to the modulation of the voltage-dependent gating properties (PubMed:16917065, PubMed:17192433). Dephosphorylation by phosphatase PTPRE isoform 2 confers neuroprotection by its inhibitory influence on the neuronal apoptotic potassium current surge in a Zn(2+)-dependent manner (PubMed:19622611). Dephosphorylated at Ser-607 by protein phosphatase PPP1CA (PubMed:21712386). Hypoxia-, seizure- or glutamate-induced neuronal activities promote calcium/calcineurin-dependent dephosphorylation resulting in a loss of KCNB1-containing clustering and enhanced channel activity (PubMed:15195093, PubMed:16319318, PubMed:16407566, PubMed:16917065, PubMed:17192433). In response to brain ischemia, Ser-567 and Ser-607 are strongly dephosphorylated while Ser-457 and Ser-719 are less dephosphorylated (PubMed:17192433). In response to brain seizures, phosphorylation levels on Ser-567 and Ser-607 are greatly reduced (PubMed:17192433). Phosphorylated/dephosphorylated by Src or FYN tyrosine-protein kinases and tyrosine phosphatase PTPRE in primary Schwann cells and sciatic nerve tissue (By similarity). Phosphorylation at Ser-593 of the FFAT motif activates interaction with MOSPD2, VAPA and VAPB (By similarity).</text>
</comment>
<comment type="PTM">
    <text evidence="53">Acetylated. Acetylation occurs in pancreatic beta cells in response to stimulation by incretin hormones in a histone acetyltransferase (HAT)/histone deacetylase (HDAC)-dependent signaling pathway, promoting beta cell survival (PubMed:21818121).</text>
</comment>
<comment type="PTM">
    <text evidence="51">Sumoylated on Lys-474, preferentially with SUMO1; sumoylation induces a positive shift in the voltage-dependence of activation and inhibits channel activity (PubMed:21518833). Sumoylation increases the frequency of repetitive action potential firing at the cell surface of hippocampal neurons and decreases its frequency in pancreatic beta cells (PubMed:21518833). Desumoylated by SENP1 (PubMed:21518833).</text>
</comment>
<comment type="PTM">
    <text evidence="64">Not glycosylated (PubMed:8083226).</text>
</comment>
<comment type="similarity">
    <text evidence="79">Belongs to the potassium channel family. B (Shab) (TC 1.A.1.2) subfamily. Kv2.1/KCNB1 sub-subfamily.</text>
</comment>
<comment type="sequence caution" evidence="79">
    <conflict type="erroneous initiation">
        <sequence resource="EMBL-CDS" id="CAA34497"/>
    </conflict>
    <text>Truncated N-terminus.</text>
</comment>
<reference key="1">
    <citation type="journal article" date="1989" name="Nature">
        <title>A novel potassium channel with delayed rectifier properties isolated from rat brain by expression cloning.</title>
        <authorList>
            <person name="Frech G.C."/>
            <person name="Vandongen A.M.J."/>
            <person name="Schuster G."/>
            <person name="Brown A.M."/>
            <person name="Joho R.H."/>
        </authorList>
    </citation>
    <scope>NUCLEOTIDE SEQUENCE [MRNA] OF 4-857</scope>
    <scope>FUNCTION</scope>
    <scope>TRANSPORTER ACTIVITY</scope>
    <scope>BIOPHYSICOCHEMICAL PROPERTIES</scope>
    <scope>ACTIVITY REGULATION</scope>
    <source>
        <tissue>Brain</tissue>
    </source>
</reference>
<reference key="2">
    <citation type="submission" date="1990-02" db="EMBL/GenBank/DDBJ databases">
        <authorList>
            <person name="Frech G.C."/>
        </authorList>
    </citation>
    <scope>SEQUENCE REVISION</scope>
</reference>
<reference key="3">
    <citation type="journal article" date="1992" name="J. Neurosci.">
        <title>Distinct spatial and temporal expression patterns of K+ channel mRNAs from different subfamilies.</title>
        <authorList>
            <person name="Drewe J.A."/>
            <person name="Verma S."/>
            <person name="Frech G.C."/>
            <person name="Joho R.H."/>
        </authorList>
    </citation>
    <scope>NUCLEOTIDE SEQUENCE [MRNA] OF 1-575</scope>
    <scope>TISSUE SPECIFICITY</scope>
</reference>
<reference key="4">
    <citation type="journal article" date="1990" name="Neuron">
        <title>Alteration and restoration of K+ channel function by deletions at the N- and C-termini.</title>
        <authorList>
            <person name="VanDongen A.M."/>
            <person name="Frech G.C."/>
            <person name="Drewe J.A."/>
            <person name="Joho R.H."/>
            <person name="Brown A.M."/>
        </authorList>
    </citation>
    <scope>FUNCTION</scope>
    <scope>TRANSPORTER ACTIVITY</scope>
    <scope>BIOPHYSICOCHEMICAL PROPERTIES</scope>
</reference>
<reference key="5">
    <citation type="journal article" date="1991" name="Mol. Pharmacol.">
        <title>Patterns of internal and external tetraethylammonium block in four homologous K+ channels.</title>
        <authorList>
            <person name="Taglialatela M."/>
            <person name="Vandongen A.M."/>
            <person name="Drewe J.A."/>
            <person name="Joho R.H."/>
            <person name="Brown A.M."/>
            <person name="Kirsch G.E."/>
        </authorList>
    </citation>
    <scope>FUNCTION</scope>
    <scope>TRANSPORTER ACTIVITY</scope>
    <scope>ACTIVITY REGULATION</scope>
</reference>
<reference key="6">
    <citation type="journal article" date="1991" name="Proc. Natl. Acad. Sci. U.S.A.">
        <title>Immunological identification and characterization of a delayed rectifier K+ channel polypeptide in rat brain.</title>
        <authorList>
            <person name="Trimmer J.S."/>
        </authorList>
    </citation>
    <scope>SUBCELLULAR LOCATION</scope>
    <scope>TISSUE SPECIFICITY</scope>
</reference>
<reference key="7">
    <citation type="journal article" date="1993" name="FEBS Lett.">
        <title>Expression of Kv2.1 delayed rectifier K+ channel isoforms in the developing rat brain.</title>
        <authorList>
            <person name="Trimmer J.S."/>
        </authorList>
    </citation>
    <scope>SUBCELLULAR LOCATION</scope>
    <scope>TISSUE SPECIFICITY</scope>
</reference>
<reference key="8">
    <citation type="journal article" date="1993" name="J. Neurosci.">
        <title>Contrasting immunohistochemical localizations in rat brain of two novel K+ channels of the Shab subfamily.</title>
        <authorList>
            <person name="Hwang P.M."/>
            <person name="Fotuhi M."/>
            <person name="Bredt D.S."/>
            <person name="Cunningham A.M."/>
            <person name="Snyder S.H."/>
        </authorList>
    </citation>
    <scope>SUBCELLULAR LOCATION</scope>
    <scope>TISSUE SPECIFICITY</scope>
</reference>
<reference key="9">
    <citation type="journal article" date="1994" name="J. Biol. Chem.">
        <title>Properties of Kv2.1 K+ channels expressed in transfected mammalian cells.</title>
        <authorList>
            <person name="Shi G."/>
            <person name="Kleinklaus A.K."/>
            <person name="Marrion N.V."/>
            <person name="Trimmer J.S."/>
        </authorList>
    </citation>
    <scope>FUNCTION</scope>
    <scope>TRANSPORTER ACTIVITY</scope>
    <scope>BIOPHYSICOCHEMICAL PROPERTIES</scope>
    <scope>PHOSPHORYLATION</scope>
    <scope>ACTIVITY REGULATION</scope>
    <scope>SUBCELLULAR LOCATION</scope>
    <scope>LACK OF GLYCOSYLATION</scope>
</reference>
<reference key="10">
    <citation type="journal article" date="1995" name="J. Neurosci.">
        <title>Association and colocalization of K+ channel alpha- and beta-subunit polypeptides in rat brain.</title>
        <authorList>
            <person name="Rhodes K.J."/>
            <person name="Keilbaugh S.A."/>
            <person name="Barrezueta N.X."/>
            <person name="Lopez K.L."/>
            <person name="Trimmer J.S."/>
        </authorList>
    </citation>
    <scope>SUBCELLULAR LOCATION</scope>
    <scope>TISSUE SPECIFICITY</scope>
    <scope>LACK OF INTERACTION WITH KCNAB1 AND KCNAB2</scope>
</reference>
<reference key="11">
    <citation type="journal article" date="1995" name="Neuron">
        <title>An inhibitor of the Kv2.1 potassium channel isolated from the venom of a Chilean tarantula.</title>
        <authorList>
            <person name="Swartz K.J."/>
            <person name="MacKinnon R."/>
        </authorList>
    </citation>
    <scope>FUNCTION</scope>
    <scope>TRANSPORTER ACTIVITY</scope>
    <scope>ACTIVITY REGULATION</scope>
</reference>
<reference key="12">
    <citation type="journal article" date="1996" name="J. Cell Biol.">
        <title>Identification of a cytoplasmic domain important in the polarized expression and clustering of the Kv2.1 K+ channel.</title>
        <authorList>
            <person name="Scannevin R.H."/>
            <person name="Murakoshi H."/>
            <person name="Rhodes K.J."/>
            <person name="Trimmer J.S."/>
        </authorList>
    </citation>
    <scope>FUNCTION</scope>
    <scope>TRANSPORTER ACTIVITY</scope>
    <scope>SUBCELLULAR LOCATION</scope>
    <scope>DOMAIN</scope>
</reference>
<reference key="13">
    <citation type="journal article" date="1996" name="EMBO J.">
        <title>Kv8.1, a new neuronal potassium channel subunit with specific inhibitory properties towards Shab and Shaw channels.</title>
        <authorList>
            <person name="Hugnot J.-P."/>
            <person name="Salinas M."/>
            <person name="Lesage F."/>
            <person name="Guillemare E."/>
            <person name="de Weille J."/>
            <person name="Heurteaux C."/>
            <person name="Mattei M.-G."/>
            <person name="Lazdunski M."/>
        </authorList>
    </citation>
    <scope>FUNCTION</scope>
    <scope>SUBUNIT</scope>
    <scope>INTERACTION WITH KCNV1</scope>
    <scope>SUBCELLULAR LOCATION</scope>
</reference>
<reference key="14">
    <citation type="journal article" date="1996" name="FEBS Lett.">
        <title>Kv2.1 and electrically silent Kv6.1 potassium channel subunits combine and express a novel current.</title>
        <authorList>
            <person name="Post M.A."/>
            <person name="Kirsch G.E."/>
            <person name="Brown A.M."/>
        </authorList>
    </citation>
    <scope>FUNCTION</scope>
    <scope>SUBUNIT</scope>
    <scope>INTERACTION WITH KCNG1</scope>
    <scope>SUBCELLULAR LOCATION</scope>
</reference>
<reference key="15">
    <citation type="journal article" date="1997" name="EMBO J.">
        <title>Kv2.1/Kv9.3, a novel ATP-dependent delayed-rectifier K+ channel in oxygen-sensitive pulmonary artery myocytes.</title>
        <authorList>
            <person name="Patel A.J."/>
            <person name="Lazdunski M."/>
            <person name="Honore E."/>
        </authorList>
    </citation>
    <scope>FUNCTION</scope>
    <scope>TRANSPORTER ACTIVITY</scope>
    <scope>SUBUNIT</scope>
    <scope>INTERACTION WITH KCNS3</scope>
    <scope>SUBCELLULAR LOCATION</scope>
    <scope>ACTIVITY REGULATION</scope>
    <scope>TISSUE SPECIFICITY</scope>
</reference>
<reference key="16">
    <citation type="journal article" date="1997" name="J. Biol. Chem.">
        <title>Modes of regulation of shab K+ channel activity by the Kv8.1 subunit.</title>
        <authorList>
            <person name="Salinas M."/>
            <person name="de Weille J."/>
            <person name="Guillemare E."/>
            <person name="Lazdunski M."/>
            <person name="Hugnot J.-P."/>
        </authorList>
    </citation>
    <scope>FUNCTION</scope>
    <scope>SUBUNIT</scope>
    <scope>SUBCELLULAR LOCATION</scope>
</reference>
<reference key="17">
    <citation type="journal article" date="1997" name="J. Biol. Chem.">
        <title>New modulatory alpha subunits for mammalian Shab K+ channels.</title>
        <authorList>
            <person name="Salinas M."/>
            <person name="Duprat F."/>
            <person name="Heurteaux C."/>
            <person name="Hugnot J.-P."/>
            <person name="Lazdunski M."/>
        </authorList>
    </citation>
    <scope>FUNCTION</scope>
    <scope>SUBUNIT</scope>
    <scope>SUBCELLULAR LOCATION</scope>
</reference>
<reference key="18">
    <citation type="journal article" date="1997" name="Mol. Pharmacol.">
        <title>Phosphorylation of the Kv2.1 K+ channel alters voltage-dependent activation.</title>
        <authorList>
            <person name="Murakoshi H."/>
            <person name="Shi G."/>
            <person name="Scannevin R.H."/>
            <person name="Trimmer J.S."/>
        </authorList>
    </citation>
    <scope>FUNCTION</scope>
    <scope>TRANSPORTER ACTIVITY</scope>
    <scope>PHOSPHORYLATION</scope>
    <scope>MUTAGENESIS OF SER-444 AND SER-496</scope>
</reference>
<reference key="19">
    <citation type="journal article" date="1998" name="Am. J. Physiol.">
        <title>Modulation of potassium channel gating by coexpression of Kv2.1 with regulatory Kv5.1 or Kv6.1 alpha-subunits.</title>
        <authorList>
            <person name="Kramer J.W."/>
            <person name="Post M.A."/>
            <person name="Brown A.M."/>
            <person name="Kirsch G.E."/>
        </authorList>
    </citation>
    <scope>FUNCTION</scope>
    <scope>SUBUNIT</scope>
    <scope>INTERACTION WITH KCNF1 AND KCNG1</scope>
    <scope>SUBCELLULAR LOCATION</scope>
</reference>
<reference key="20">
    <citation type="journal article" date="1998" name="J. Clin. Invest.">
        <title>Molecular identification of the role of voltage-gated K+ channels, Kv1.5 and Kv2.1, in hypoxic pulmonary vasoconstriction and control of resting membrane potential in rat pulmonary artery myocytes.</title>
        <authorList>
            <person name="Archer S.L."/>
            <person name="Souil E."/>
            <person name="Dinh-Xuan A.T."/>
            <person name="Schremmer B."/>
            <person name="Mercier J.C."/>
            <person name="El Yaagoubi A."/>
            <person name="Nguyen-Huu L."/>
            <person name="Reeve H.L."/>
            <person name="Hampl V."/>
        </authorList>
    </citation>
    <scope>FUNCTION</scope>
    <scope>SUBCELLULAR LOCATION</scope>
    <scope>TISSUE SPECIFICITY</scope>
</reference>
<reference key="21">
    <citation type="journal article" date="1998" name="J. Biol. Chem.">
        <title>Cloning and expression of a novel K+ channel regulatory protein, KChAP.</title>
        <authorList>
            <person name="Wible B.A."/>
            <person name="Yang Q."/>
            <person name="Kuryshev Y.A."/>
            <person name="Accili E.A."/>
            <person name="Brown A.M."/>
        </authorList>
    </citation>
    <scope>FUNCTION</scope>
    <scope>TRANSPORTER ACTIVITY</scope>
    <scope>SUBCELLULAR LOCATION</scope>
    <scope>SUBUNIT</scope>
    <scope>INTERACTION WITH PIAS3</scope>
</reference>
<reference key="22">
    <citation type="journal article" date="1998" name="Neuroscience">
        <title>The K+ channel, Kv2.1, is apposed to astrocytic processes and is associated with inhibitory postsynaptic membranes in hippocampal and cortical principal neurons and inhibitory interneurons.</title>
        <authorList>
            <person name="Du J."/>
            <person name="Tao-Cheng J.H."/>
            <person name="Zerfas P."/>
            <person name="McBain C.J."/>
        </authorList>
    </citation>
    <scope>SUBCELLULAR LOCATION</scope>
    <scope>TISSUE SPECIFICITY</scope>
</reference>
<reference key="23">
    <citation type="journal article" date="1999" name="Ann. N. Y. Acad. Sci.">
        <title>Molecular diversity of K+ channels.</title>
        <authorList>
            <person name="Coetzee W.A."/>
            <person name="Amarillo Y."/>
            <person name="Chiu J."/>
            <person name="Chow A."/>
            <person name="Lau D."/>
            <person name="McCormack T."/>
            <person name="Moreno H."/>
            <person name="Nadal M.S."/>
            <person name="Ozaita A."/>
            <person name="Pountney D."/>
            <person name="Saganich M."/>
            <person name="Vega-Saenz de Miera E."/>
            <person name="Rudy B."/>
        </authorList>
    </citation>
    <scope>REVIEW</scope>
</reference>
<reference key="24">
    <citation type="journal article" date="1999" name="J. Neurosci.">
        <title>Identification of the Kv2.1 K+ channel as a major component of the delayed rectifier K+ current in rat hippocampal neurons.</title>
        <authorList>
            <person name="Murakoshi H."/>
            <person name="Trimmer J.S."/>
        </authorList>
    </citation>
    <scope>FUNCTION</scope>
    <scope>SUBCELLULAR LOCATION</scope>
    <scope>TISSUE SPECIFICITY</scope>
</reference>
<reference key="25">
    <citation type="journal article" date="1999" name="J. Neurosci.">
        <title>Delayed rectifier currents in rat globus pallidus neurons are attributable to Kv2.1 and Kv3.1/3.2 K(+) channels.</title>
        <authorList>
            <person name="Baranauskas G."/>
            <person name="Tkatch T."/>
            <person name="Surmeier D.J."/>
        </authorList>
    </citation>
    <scope>FUNCTION</scope>
    <scope>SUBCELLULAR LOCATION</scope>
    <scope>TISSUE SPECIFICITY</scope>
</reference>
<reference key="26">
    <citation type="journal article" date="2000" name="J. Physiol. (Lond.)">
        <title>Frequency-dependent regulation of rat hippocampal somato-dendritic excitability by the K+ channel subunit Kv2.1.</title>
        <authorList>
            <person name="Du J."/>
            <person name="Haak L.L."/>
            <person name="Phillips-Tansey E."/>
            <person name="Russell J.T."/>
            <person name="McBain C.J."/>
        </authorList>
    </citation>
    <scope>FUNCTION</scope>
    <scope>SUBCELLULAR LOCATION</scope>
    <scope>TISSUE SPECIFICITY</scope>
</reference>
<reference key="27">
    <citation type="journal article" date="2000" name="Neuron">
        <title>A novel targeting signal for proximal clustering of the Kv2.1 K+ channel in hippocampal neurons.</title>
        <authorList>
            <person name="Lim S.T."/>
            <person name="Antonucci D.E."/>
            <person name="Scannevin R.H."/>
            <person name="Trimmer J.S."/>
        </authorList>
    </citation>
    <scope>SUBCELLULAR LOCATION</scope>
    <scope>DOMAIN</scope>
    <scope>MUTAGENESIS OF SER-587; SER-590; PHE-591 AND SER-593</scope>
</reference>
<reference key="28">
    <citation type="journal article" date="2001" name="Mol. Endocrinol.">
        <title>Members of the Kv1 and Kv2 voltage-dependent K(+) channel families regulate insulin secretion.</title>
        <authorList>
            <person name="MacDonald P.E."/>
            <person name="Ha X.F."/>
            <person name="Wang J."/>
            <person name="Smukler S.R."/>
            <person name="Sun A.M."/>
            <person name="Gaisano H.Y."/>
            <person name="Salapatek A.M."/>
            <person name="Backx P.H."/>
            <person name="Wheeler M.B."/>
        </authorList>
    </citation>
    <scope>FUNCTION</scope>
    <scope>TISSUE SPECIFICITY</scope>
</reference>
<reference key="29">
    <citation type="journal article" date="2002" name="J. Neurosci.">
        <title>Delayed rectifier K+ currents, IK, are encoded by Kv2 alpha-subunits and regulate tonic firing in mammalian sympathetic neurons.</title>
        <authorList>
            <person name="Malin S.A."/>
            <person name="Nerbonne J.M."/>
        </authorList>
    </citation>
    <scope>FUNCTION</scope>
    <scope>SUBCELLULAR LOCATION</scope>
    <scope>TISSUE SPECIFICITY</scope>
    <scope>MUTAGENESIS OF TRP-369 AND TYR-384</scope>
</reference>
<reference key="30">
    <citation type="journal article" date="2002" name="Life Sci.">
        <title>Contributions of Kv1.2, Kv1.5 and Kv2.1 subunits to the native delayed rectifier K(+) current in rat mesenteric artery smooth muscle cells.</title>
        <authorList>
            <person name="Lu Y."/>
            <person name="Hanna S.T."/>
            <person name="Tang G."/>
            <person name="Wang R."/>
        </authorList>
    </citation>
    <scope>FUNCTION</scope>
    <scope>SUBCELLULAR LOCATION</scope>
</reference>
<reference key="31">
    <citation type="journal article" date="2002" name="Mol. Endocrinol.">
        <title>Synaptosome-associated protein of 25 kilodaltons modulates Kv2.1 voltage-dependent K(+) channels in neuroendocrine islet beta-cells through an interaction with the channel N terminus.</title>
        <authorList>
            <person name="MacDonald P.E."/>
            <person name="Wang G."/>
            <person name="Tsuk S."/>
            <person name="Dodo C."/>
            <person name="Kang Y."/>
            <person name="Tang L."/>
            <person name="Wheeler M.B."/>
            <person name="Cattral M.S."/>
            <person name="Lakey J.R."/>
            <person name="Salapatek A.M."/>
            <person name="Lotan I."/>
            <person name="Gaisano H.Y."/>
        </authorList>
    </citation>
    <scope>FUNCTION</scope>
    <scope>INTERACTION WITH SNAP25</scope>
    <scope>SUBCELLULAR LOCATION</scope>
    <scope>TISSUE SPECIFICITY</scope>
</reference>
<reference key="32">
    <citation type="journal article" date="2002" name="Mol. Pharmacol.">
        <title>Novel tarantula toxins for subtypes of voltage-dependent potassium channels in the Kv2 and Kv4 subfamilies.</title>
        <authorList>
            <person name="Escoubas P."/>
            <person name="Diochot S."/>
            <person name="Celerier M.-L."/>
            <person name="Nakajima T."/>
            <person name="Lazdunski M."/>
        </authorList>
    </citation>
    <scope>FUNCTION</scope>
    <scope>TRANSPORTER ACTIVITY</scope>
    <scope>ACTIVITY REGULATION</scope>
</reference>
<reference key="33">
    <citation type="journal article" date="2003" name="J. Biol. Chem.">
        <title>The Roles of N- and C-terminal determinants in the activation of the Kv2.1 potassium channel.</title>
        <authorList>
            <person name="Ju M."/>
            <person name="Stevens L."/>
            <person name="Leadbitter E."/>
            <person name="Wray D."/>
        </authorList>
    </citation>
    <scope>FUNCTION</scope>
    <scope>TRANSPORTER ACTIVITY</scope>
    <scope>SELF-ASSOCIATION</scope>
    <scope>DOMAIN</scope>
    <scope>SUBCELLULAR LOCATION</scope>
    <scope>MUTAGENESIS OF GLN-71 AND GLU-79</scope>
</reference>
<reference key="34">
    <citation type="journal article" date="2003" name="J. Biol. Chem.">
        <title>Phosphorylation-dependent regulation of Kv2.1 Channel activity at tyrosine 124 by Src and by protein-tyrosine phosphatase epsilon.</title>
        <authorList>
            <person name="Tiran Z."/>
            <person name="Peretz A."/>
            <person name="Attali B."/>
            <person name="Elson A."/>
        </authorList>
    </citation>
    <scope>PHOSPHORYLATION AT TYR-128</scope>
    <scope>SUBCELLULAR LOCATION</scope>
    <scope>MUTAGENESIS OF TYR-128</scope>
</reference>
<reference key="35">
    <citation type="journal article" date="2003" name="J. Biol. Chem.">
        <title>Syntaxin 1A binds to the cytoplasmic C terminus of Kv2.1 to regulate channel gating and trafficking.</title>
        <authorList>
            <person name="Leung Y.M."/>
            <person name="Kang Y."/>
            <person name="Gao X."/>
            <person name="Xia F."/>
            <person name="Xie H."/>
            <person name="Sheu L."/>
            <person name="Tsuk S."/>
            <person name="Lotan I."/>
            <person name="Tsushima R.G."/>
            <person name="Gaisano H.Y."/>
        </authorList>
    </citation>
    <scope>FUNCTION</scope>
    <scope>INTERACTION WITH STX1A</scope>
    <scope>SUBCELLULAR LOCATION</scope>
</reference>
<reference key="36">
    <citation type="journal article" date="2003" name="J. Biol. Chem.">
        <title>Direct interaction of target SNAREs with the Kv2.1 channel. Modal regulation of channel activation and inactivation gating.</title>
        <authorList>
            <person name="Michaelevski I."/>
            <person name="Chikvashvili D."/>
            <person name="Tsuk S."/>
            <person name="Singer-Lahat D."/>
            <person name="Kang Y."/>
            <person name="Linial M."/>
            <person name="Gaisano H.Y."/>
            <person name="Fili O."/>
            <person name="Lotan I."/>
        </authorList>
    </citation>
    <scope>FUNCTION</scope>
    <scope>INTERACTION WITH SNP25 AND STX1A</scope>
    <scope>SUBCELLULAR LOCATION</scope>
</reference>
<reference key="37">
    <citation type="journal article" date="2003" name="J. Neurosci.">
        <title>Mediation of neuronal apoptosis by Kv2.1-encoded potassium channels.</title>
        <authorList>
            <person name="Pal S."/>
            <person name="Hartnett K.A."/>
            <person name="Nerbonne J.M."/>
            <person name="Levitan E.S."/>
            <person name="Aizenman E."/>
        </authorList>
    </citation>
    <scope>FUNCTION</scope>
    <scope>SUBCELLULAR LOCATION</scope>
    <scope>TISSUE SPECIFICITY</scope>
    <scope>MUTAGENESIS OF TRP-369 AND TYR-384</scope>
</reference>
<reference key="38">
    <citation type="journal article" date="2003" name="J. Neurosci.">
        <title>MinK-related peptide 2 modulates Kv2.1 and Kv3.1 potassium channels in mammalian brain.</title>
        <authorList>
            <person name="McCrossan Z.A."/>
            <person name="Lewis A."/>
            <person name="Panaghie G."/>
            <person name="Jordan P.N."/>
            <person name="Christini D.J."/>
            <person name="Lerner D.J."/>
            <person name="Abbott G.W."/>
        </authorList>
    </citation>
    <scope>FUNCTION</scope>
    <scope>SUBUNIT</scope>
    <scope>INTERACTION WITH KCNE3</scope>
    <scope>SUBCELLULAR LOCATION</scope>
    <scope>DOMAIN</scope>
    <scope>TISSUE SPECIFICITY</scope>
</reference>
<reference key="39">
    <citation type="journal article" date="2004" name="J. Biol. Chem.">
        <title>NFATc3 regulates Kv2.1 expression in arterial smooth muscle.</title>
        <authorList>
            <person name="Amberg G.C."/>
            <person name="Rossow C.F."/>
            <person name="Navedo M.F."/>
            <person name="Santana L.F."/>
        </authorList>
    </citation>
    <scope>FUNCTION</scope>
    <scope>SUBCELLULAR LOCATION</scope>
    <scope>INDUCTION</scope>
    <scope>TISSUE SPECIFICITY</scope>
</reference>
<reference key="40">
    <citation type="journal article" date="2004" name="Nat. Neurosci.">
        <title>Regulation of ion channel localization and phosphorylation by neuronal activity.</title>
        <authorList>
            <person name="Misonou H."/>
            <person name="Mohapatra D.P."/>
            <person name="Park E.W."/>
            <person name="Leung V."/>
            <person name="Zhen D."/>
            <person name="Misonou K."/>
            <person name="Anderson A.E."/>
            <person name="Trimmer J.S."/>
        </authorList>
    </citation>
    <scope>FUNCTION</scope>
    <scope>PHOSPHORYLATION</scope>
    <scope>DEPHOSPHORYLATION</scope>
    <scope>SUBCELLULAR LOCATION</scope>
</reference>
<reference key="41">
    <citation type="journal article" date="2005" name="Cell Biochem. Biophys.">
        <title>Molecular determinants of voltage-gated potassium currents in vascular smooth muscle.</title>
        <authorList>
            <person name="Cox R.H."/>
        </authorList>
    </citation>
    <scope>REVIEW</scope>
</reference>
<reference key="42">
    <citation type="journal article" date="2005" name="J. Cell Sci.">
        <title>Targeting of voltage-gated potassium channel isoforms to distinct cell surface microdomains.</title>
        <authorList>
            <person name="O'Connell K.M."/>
            <person name="Tamkun M.M."/>
        </authorList>
    </citation>
    <scope>SUBCELLULAR LOCATION</scope>
</reference>
<reference key="43">
    <citation type="journal article" date="2005" name="J. Neurosci.">
        <title>Calcium- and metabolic state-dependent modulation of the voltage-dependent Kv2.1 channel regulates neuronal excitability in response to ischemia.</title>
        <authorList>
            <person name="Misonou H."/>
            <person name="Mohapatra D.P."/>
            <person name="Menegola M."/>
            <person name="Trimmer J.S."/>
        </authorList>
    </citation>
    <scope>FUNCTION</scope>
    <scope>PHOSPHORYLATION</scope>
    <scope>DEPHOSPHORYLATION</scope>
    <scope>SUBCELLULAR LOCATION</scope>
    <scope>TISSUE SPECIFICITY</scope>
</reference>
<reference key="44">
    <citation type="journal article" date="2006" name="Cell Death Differ.">
        <title>Apoptotic surface delivery of K+ channels.</title>
        <authorList>
            <person name="Pal S.K."/>
            <person name="Takimoto K."/>
            <person name="Aizenman E."/>
            <person name="Levitan E.S."/>
        </authorList>
    </citation>
    <scope>FUNCTION</scope>
    <scope>SUBCELLULAR LOCATION</scope>
</reference>
<reference key="45">
    <citation type="journal article" date="2006" name="J. Neurosci.">
        <title>The Kv2.1 C terminus can autonomously transfer Kv2.1-like phosphorylation-dependent localization, voltage-dependent gating, and muscarinic modulation to diverse Kv channels.</title>
        <authorList>
            <person name="Mohapatra D.P."/>
            <person name="Trimmer J.S."/>
        </authorList>
    </citation>
    <scope>FUNCTION</scope>
    <scope>PHOSPHORYLATION</scope>
    <scope>DEPHOSPHORYLATION</scope>
    <scope>DOMAIN</scope>
    <scope>SUBCELLULAR LOCATION</scope>
</reference>
<reference key="46">
    <citation type="journal article" date="2006" name="J. Neurosci.">
        <title>Kv2.1 potassium channels are retained within dynamic cell surface microdomains that are defined by a perimeter fence.</title>
        <authorList>
            <person name="O'Connell K.M."/>
            <person name="Rolig A.S."/>
            <person name="Whitesell J.D."/>
            <person name="Tamkun M.M."/>
        </authorList>
    </citation>
    <scope>SUBCELLULAR LOCATION</scope>
</reference>
<reference key="47">
    <citation type="journal article" date="2006" name="J. Neurosci.">
        <title>Bidirectional activity-dependent regulation of neuronal ion channel phosphorylation.</title>
        <authorList>
            <person name="Misonou H."/>
            <person name="Menegola M."/>
            <person name="Mohapatra D.P."/>
            <person name="Guy L.K."/>
            <person name="Park K.-S."/>
            <person name="Trimmer J.S."/>
        </authorList>
    </citation>
    <scope>PHOSPHORYLATION AT SER-457; SER-567; SER-607 AND SER-719</scope>
    <scope>SUBCELLULAR LOCATION</scope>
    <scope>TISSUE SPECIFICITY</scope>
    <scope>DEVELOPMENTAL STAGE</scope>
    <scope>FUNCTION</scope>
</reference>
<reference key="48">
    <citation type="journal article" date="2006" name="Science">
        <title>Graded regulation of the Kv2.1 potassium channel by variable phosphorylation.</title>
        <authorList>
            <person name="Park K.-S."/>
            <person name="Mohapatra D.P."/>
            <person name="Misonou H."/>
            <person name="Trimmer J.S."/>
        </authorList>
    </citation>
    <scope>PHOSPHORYLATION AT SER-15; SER-457; SER-484; SER-496; SER-503; SER-520; SER-541; SER-567; SER-590; SER-607; SER-655; SER-719; SER-771; SER-799; SER-804 AND THR-836</scope>
    <scope>FUNCTION</scope>
    <scope>IDENTIFICATION BY MASS SPECTROMETRY</scope>
    <scope>MUTAGENESIS OF SER-15; SER-457; SER-484; SER-541; SER-567; SER-607; SER-655; SER-719; SER-771 AND SER-804</scope>
</reference>
<reference key="49">
    <citation type="journal article" date="2007" name="Channels">
        <title>Proteomic analyses of K(v)2.1 channel phosphorylation sites determining cell background specific differences in function.</title>
        <authorList>
            <person name="Park K.S."/>
            <person name="Mohapatra D.P."/>
            <person name="Trimmer J.S."/>
        </authorList>
    </citation>
    <scope>PHOSPHORYLATION AT SER-15; SER-457; SER-541; SER-607; SER-655; SER-719; SER-799; SER-804 AND THR-836</scope>
    <scope>IDENTIFICATION BY MASS SPECTROMETRY</scope>
</reference>
<reference key="50">
    <citation type="journal article" date="2007" name="J. Cell Sci.">
        <title>A cytoskeletal-based perimeter fence selectively corrals a sub-population of cell surface Kv2.1 channels.</title>
        <authorList>
            <person name="Tamkun M.M."/>
            <person name="O'connell K.M."/>
            <person name="Rolig A.S."/>
        </authorList>
    </citation>
    <scope>SUBCELLULAR LOCATION</scope>
</reference>
<reference key="51">
    <citation type="journal article" date="2007" name="J. Neurosci.">
        <title>K+ channel facilitation of exocytosis by dynamic interaction with syntaxin.</title>
        <authorList>
            <person name="Singer-Lahat D."/>
            <person name="Sheinin A."/>
            <person name="Chikvashvili D."/>
            <person name="Tsuk S."/>
            <person name="Greitzer D."/>
            <person name="Friedrich R."/>
            <person name="Feinshreiber L."/>
            <person name="Ashery U."/>
            <person name="Benveniste M."/>
            <person name="Levitan E.S."/>
            <person name="Lotan I."/>
        </authorList>
    </citation>
    <scope>FUNCTION</scope>
    <scope>INTERACTION WITH STX1A</scope>
    <scope>SUBCELLULAR LOCATION</scope>
    <scope>MUTAGENESIS OF TRP-369 AND TYR-384</scope>
</reference>
<reference key="52">
    <citation type="journal article" date="2007" name="J. Physiol. (Lond.)">
        <title>Kv2 subunits underlie slowly inactivating potassium current in rat neocortical pyramidal neurons.</title>
        <authorList>
            <person name="Guan D."/>
            <person name="Tkatch T."/>
            <person name="Surmeier D.J."/>
            <person name="Armstrong W.E."/>
            <person name="Foehring R.C."/>
        </authorList>
    </citation>
    <scope>FUNCTION</scope>
    <scope>SUBCELLULAR LOCATION</scope>
    <scope>TISSUE SPECIFICITY</scope>
</reference>
<reference key="53">
    <citation type="journal article" date="2007" name="Proc. Natl. Acad. Sci. U.S.A.">
        <title>Apoptotic surge of potassium currents is mediated by p38 phosphorylation of Kv2.1.</title>
        <authorList>
            <person name="Redman P.T."/>
            <person name="He K."/>
            <person name="Hartnett K.A."/>
            <person name="Jefferson B.S."/>
            <person name="Hu L."/>
            <person name="Rosenberg P.A."/>
            <person name="Levitan E.S."/>
            <person name="Aizenman E."/>
        </authorList>
    </citation>
    <scope>PHOSPHORYLATION AT SER-804</scope>
    <scope>MUTAGENESIS OF TRP-369; TYR-384 AND SER-804</scope>
    <scope>FUNCTION</scope>
    <scope>SUBCELLULAR LOCATION</scope>
</reference>
<reference key="54">
    <citation type="journal article" date="2008" name="Am. J. Physiol.">
        <title>Localization and mobility of the delayed-rectifer K+ channel Kv2.1 in adult cardiomyocytes.</title>
        <authorList>
            <person name="O'Connell K.M."/>
            <person name="Whitesell J.D."/>
            <person name="Tamkun M.M."/>
        </authorList>
    </citation>
    <scope>SUBCELLULAR LOCATION</scope>
    <scope>TISSUE SPECIFICITY</scope>
</reference>
<reference key="55">
    <citation type="journal article" date="2008" name="BMC Neurosci.">
        <title>The Kv2.1 K+ channel targets to the axon initial segment of hippocampal and cortical neurons in culture and in situ.</title>
        <authorList>
            <person name="Sarmiere P.D."/>
            <person name="Weigle C.M."/>
            <person name="Tamkun M.M."/>
        </authorList>
    </citation>
    <scope>SUBCELLULAR LOCATION</scope>
    <scope>TISSUE SPECIFICITY</scope>
</reference>
<reference key="56">
    <citation type="journal article" date="2008" name="J. Neurosci.">
        <title>Interdomain cytoplasmic interactions govern the intracellular trafficking, gating, and modulation of the Kv2.1 channel.</title>
        <authorList>
            <person name="Mohapatra D.P."/>
            <person name="Siino D.F."/>
            <person name="Trimmer J.S."/>
        </authorList>
    </citation>
    <scope>FUNCTION</scope>
    <scope>SELF-ASSOCIATION</scope>
    <scope>SUBCELLULAR LOCATION</scope>
    <scope>PHOSPHORYLATION</scope>
    <scope>DOMAIN</scope>
</reference>
<reference key="57">
    <citation type="journal article" date="2008" name="Pflugers Arch.">
        <title>VAMP2 interacts directly with the N terminus of Kv2.1 to enhance channel inactivation.</title>
        <authorList>
            <person name="Lvov A."/>
            <person name="Chikvashvili D."/>
            <person name="Michaelevski I."/>
            <person name="Lotan I."/>
        </authorList>
    </citation>
    <scope>INTERACTION WITH VAMP2</scope>
    <scope>SUBCELLULAR LOCATION</scope>
</reference>
<reference key="58">
    <citation type="journal article" date="2008" name="PLoS ONE">
        <title>Direct interaction of endogenous Kv channels with syntaxin enhances exocytosis by neuroendocrine cells.</title>
        <authorList>
            <person name="Singer-Lahat D."/>
            <person name="Chikvashvili D."/>
            <person name="Lotan I."/>
        </authorList>
    </citation>
    <scope>FUNCTION</scope>
    <scope>INTERACTION WITH STX1A</scope>
    <scope>SUBCELLULAR LOCATION</scope>
</reference>
<reference key="59">
    <citation type="journal article" date="2009" name="Channels">
        <title>Regulation of intrinsic excitability in hippocampal neurons by activity-dependent modulation of the KV2.1 potassium channel.</title>
        <authorList>
            <person name="Mohapatra D.P."/>
            <person name="Misonou H."/>
            <person name="Pan S.J."/>
            <person name="Held J.E."/>
            <person name="Surmeier D.J."/>
            <person name="Trimmer J.S."/>
        </authorList>
    </citation>
    <scope>FUNCTION</scope>
    <scope>SUBCELLULAR LOCATION</scope>
</reference>
<reference key="60">
    <citation type="journal article" date="2009" name="J. Biol. Chem.">
        <title>Mutation of histidine 105 in the T1 domain of the potassium channel Kv2.1 disrupts heteromerization with Kv6.3 and Kv6.4.</title>
        <authorList>
            <person name="Mederos y Schnitzler M."/>
            <person name="Rinne S."/>
            <person name="Skrobek L."/>
            <person name="Renigunta V."/>
            <person name="Schlichthorl G."/>
            <person name="Derst C."/>
            <person name="Gudermann T."/>
            <person name="Daut J."/>
            <person name="Preisig-Muller R."/>
        </authorList>
    </citation>
    <scope>TISSUE SPECIFICITY</scope>
</reference>
<reference key="61">
    <citation type="journal article" date="2009" name="J. Biol. Chem.">
        <title>Rearrangements in the relative orientation of cytoplasmic domains induced by a membrane-anchored protein mediate modulations in Kv channel gating.</title>
        <authorList>
            <person name="Lvov A."/>
            <person name="Greitzer D."/>
            <person name="Berlin S."/>
            <person name="Chikvashvili D."/>
            <person name="Tsuk S."/>
            <person name="Lotan I."/>
            <person name="Michaelevski I."/>
        </authorList>
    </citation>
    <scope>INTERACTION WITH VAMP2</scope>
    <scope>SELF-ASSOCIATION</scope>
    <scope>DOMAIN</scope>
    <scope>SUBCELLULAR LOCATION</scope>
</reference>
<reference key="62">
    <citation type="journal article" date="2009" name="J. Membr. Biol.">
        <title>Regulation of the Kv2.1 potassium channel by MinK and MiRP1.</title>
        <authorList>
            <person name="McCrossan Z.A."/>
            <person name="Roepke T.K."/>
            <person name="Lewis A."/>
            <person name="Panaghie G."/>
            <person name="Abbott G.W."/>
        </authorList>
    </citation>
    <scope>FUNCTION</scope>
    <scope>SUBUNIT</scope>
    <scope>INTERACTION WITH KCNE1 AND KCNE2</scope>
    <scope>SUBCELLULAR LOCATION</scope>
    <scope>DOMAIN</scope>
    <scope>TISSUE SPECIFICITY</scope>
</reference>
<reference key="63">
    <citation type="journal article" date="2009" name="J. Neurochem.">
        <title>The Kv2.1 channels mediate neuronal apoptosis induced by excitotoxicity.</title>
        <authorList>
            <person name="Yao H."/>
            <person name="Zhou K."/>
            <person name="Yan D."/>
            <person name="Li M."/>
            <person name="Wang Y."/>
        </authorList>
    </citation>
    <scope>FUNCTION</scope>
    <scope>SUBCELLULAR LOCATION</scope>
    <scope>INTERACTION WITH SNAP25; STX1A AND VAMP2</scope>
</reference>
<reference key="64">
    <citation type="journal article" date="2009" name="J. Physiol. (Lond.)">
        <title>Regulation of apoptotic potassium currents by coordinated zinc-dependent signalling.</title>
        <authorList>
            <person name="Redman P.T."/>
            <person name="Hartnett K.A."/>
            <person name="Aras M.A."/>
            <person name="Levitan E.S."/>
            <person name="Aizenman E."/>
        </authorList>
    </citation>
    <scope>FUNCTION</scope>
    <scope>PHOSPHORYLATION AT TYR-128</scope>
    <scope>DEPHOSPHORYLATION</scope>
    <scope>MUTAGENESIS OF TYR-128 AND SER-804</scope>
</reference>
<reference key="65">
    <citation type="journal article" date="2010" name="J. Biol. Chem.">
        <title>Formation of heteromeric Kv2 channels in mammalian brain neurons.</title>
        <authorList>
            <person name="Kihira Y."/>
            <person name="Hermanstyne T.O."/>
            <person name="Misonou H."/>
        </authorList>
    </citation>
    <scope>FUNCTION</scope>
    <scope>SUBUNIT</scope>
    <scope>INTERACTION WITH KCNB2</scope>
    <scope>SUBCELLULAR LOCATION</scope>
    <scope>MUTAGENESIS OF TRP-369 AND TYR-384</scope>
    <scope>TISSUE SPECIFICITY</scope>
    <scope>IDENTIFICATION BY MASS SPECTROMETRY</scope>
</reference>
<reference key="66">
    <citation type="journal article" date="2010" name="J. Cell Sci.">
        <title>Non-conducting function of the Kv2.1 channel enables it to recruit vesicles for release in neuroendocrine and nerve cells.</title>
        <authorList>
            <person name="Feinshreiber L."/>
            <person name="Singer-Lahat D."/>
            <person name="Friedrich R."/>
            <person name="Matti U."/>
            <person name="Sheinin A."/>
            <person name="Yizhar O."/>
            <person name="Nachman R."/>
            <person name="Chikvashvili D."/>
            <person name="Rettig J."/>
            <person name="Ashery U."/>
            <person name="Lotan I."/>
        </authorList>
    </citation>
    <scope>FUNCTION</scope>
    <scope>INTERACTION WITH STX1A</scope>
    <scope>SUBCELLULAR LOCATION</scope>
    <scope>MUTAGENESIS OF TRP-369 AND TYR-384</scope>
</reference>
<reference key="67">
    <citation type="journal article" date="2011" name="J. Biol. Chem.">
        <title>Activity-dependent phosphorylation of neuronal Kv2.1 potassium channels by CDK5.</title>
        <authorList>
            <person name="Cerda O."/>
            <person name="Trimmer J.S."/>
        </authorList>
    </citation>
    <scope>PHOSPHORYLATION AT SER-520; SER-655; SER-607 AND SER-804</scope>
    <scope>DEPHOSPHORYLATION AT SER-607</scope>
    <scope>SUBCELLULAR LOCATION</scope>
</reference>
<reference key="68">
    <citation type="journal article" date="2011" name="J. Gen. Physiol.">
        <title>SUMO modification of cell surface Kv2.1 potassium channels regulates the activity of rat hippocampal neurons.</title>
        <authorList>
            <person name="Plant L.D."/>
            <person name="Dowdell E.J."/>
            <person name="Dementieva I.S."/>
            <person name="Marks J.D."/>
            <person name="Goldstein S.A."/>
        </authorList>
    </citation>
    <scope>FUNCTION</scope>
    <scope>SUMOYLATION AT LYS-474</scope>
    <scope>DESUMOYLATION</scope>
    <scope>SUBCELLULAR LOCATION</scope>
    <scope>MUTAGENESIS OF LYS-149; LYS-259 AND LYS-474</scope>
    <scope>IDENTIFICATION BY MASS SPECTROMETRY</scope>
</reference>
<reference key="69">
    <citation type="journal article" date="2012" name="Cell Death Differ.">
        <title>Pancreatic beta-cell prosurvival effects of the incretin hormones involve post-translational modification of Kv2.1 delayed rectifier channels.</title>
        <authorList>
            <person name="Kim S.J."/>
            <person name="Widenmaier S.B."/>
            <person name="Choi W.S."/>
            <person name="Nian C."/>
            <person name="Ao Z."/>
            <person name="Warnock G."/>
            <person name="McIntosh C.H."/>
        </authorList>
    </citation>
    <scope>PHOSPHORYLATION</scope>
    <scope>ACETYLATION</scope>
    <scope>INTERACTION WITH CREB1</scope>
</reference>
<reference key="70">
    <citation type="journal article" date="2012" name="Diabetologia">
        <title>The voltage-dependent potassium channel subunit Kv2.1 regulates insulin secretion from rodent and human islets independently of its electrical function.</title>
        <authorList>
            <person name="Dai X.Q."/>
            <person name="Manning Fox J.E."/>
            <person name="Chikvashvili D."/>
            <person name="Casimir M."/>
            <person name="Plummer G."/>
            <person name="Hajmrle C."/>
            <person name="Spigelman A.F."/>
            <person name="Kin T."/>
            <person name="Singer-Lahat D."/>
            <person name="Kang Y."/>
            <person name="Shapiro A.M."/>
            <person name="Gaisano H.Y."/>
            <person name="Lotan I."/>
            <person name="Macdonald P.E."/>
        </authorList>
    </citation>
    <scope>FUNCTION</scope>
    <scope>INTERACTION WITH STX1A</scope>
    <scope>SUBCELLULAR LOCATION</scope>
    <scope>TISSUE SPECIFICITY</scope>
    <scope>MUTAGENESIS OF TRP-369 AND TYR-384</scope>
</reference>
<reference key="71">
    <citation type="journal article" date="2012" name="Mol. Biol. Cell">
        <title>Kv2.1 cell surface clusters are insertion platforms for ion channel delivery to the plasma membrane.</title>
        <authorList>
            <person name="Deutsch E."/>
            <person name="Weigel A.V."/>
            <person name="Akin E.J."/>
            <person name="Fox P."/>
            <person name="Hansen G."/>
            <person name="Haberkorn C.J."/>
            <person name="Loftus R."/>
            <person name="Krapf D."/>
            <person name="Tamkun M.M."/>
        </authorList>
    </citation>
    <scope>SUBCELLULAR LOCATION</scope>
</reference>
<reference key="72">
    <citation type="journal article" date="2012" name="Nat. Commun.">
        <title>Quantitative maps of protein phosphorylation sites across 14 different rat organs and tissues.</title>
        <authorList>
            <person name="Lundby A."/>
            <person name="Secher A."/>
            <person name="Lage K."/>
            <person name="Nordsborg N.B."/>
            <person name="Dmytriyev A."/>
            <person name="Lundby C."/>
            <person name="Olsen J.V."/>
        </authorList>
    </citation>
    <scope>PHOSPHORYLATION [LARGE SCALE ANALYSIS] AT SER-484; SER-519; SER-520 AND SER-655</scope>
    <scope>IDENTIFICATION BY MASS SPECTROMETRY [LARGE SCALE ANALYSIS]</scope>
</reference>
<reference key="73">
    <citation type="journal article" date="2013" name="J. Physiol. (Lond.)">
        <title>Kv2 channels regulate firing rate in pyramidal neurons from rat sensorimotor cortex.</title>
        <authorList>
            <person name="Guan D."/>
            <person name="Armstrong W.E."/>
            <person name="Foehring R.C."/>
        </authorList>
    </citation>
    <scope>FUNCTION</scope>
    <scope>SUBCELLULAR LOCATION</scope>
</reference>
<reference key="74">
    <citation type="journal article" date="2014" name="J. Biol. Chem.">
        <title>Specific sorting and post-Golgi trafficking of dendritic potassium channels in living neurons.</title>
        <authorList>
            <person name="Jensen C.S."/>
            <person name="Watanabe S."/>
            <person name="Rasmussen H.B."/>
            <person name="Schmitt N."/>
            <person name="Olesen S.P."/>
            <person name="Frost N.A."/>
            <person name="Blanpied T.A."/>
            <person name="Misonou H."/>
        </authorList>
    </citation>
    <scope>INTERACTION WITH MYL12B</scope>
    <scope>SUBCELLULAR LOCATION</scope>
    <scope>MUTAGENESIS OF SER-590</scope>
</reference>
<reference key="75">
    <citation type="journal article" date="2014" name="J. Comp. Neurol.">
        <title>A unique ion channel clustering domain on the axon initial segment of mammalian neurons.</title>
        <authorList>
            <person name="King A.N."/>
            <person name="Manning C.F."/>
            <person name="Trimmer J.S."/>
        </authorList>
    </citation>
    <scope>PHOSPHORYLATION AT SER-607</scope>
    <scope>SUBCELLULAR LOCATION</scope>
    <scope>TISSUE SPECIFICITY</scope>
</reference>
<reference key="76">
    <citation type="journal article" date="2014" name="J. Physiol. (Lond.)">
        <title>Syntaxin-binding domain of Kv2.1 is essential for the expression of apoptotic K+ currents.</title>
        <authorList>
            <person name="McCord M.C."/>
            <person name="Kullmann P.H."/>
            <person name="He K."/>
            <person name="Hartnett K.A."/>
            <person name="Horn J.P."/>
            <person name="Lotan I."/>
            <person name="Aizenman E."/>
        </authorList>
    </citation>
    <scope>FUNCTION</scope>
    <scope>INTERACTION WITH STX1A</scope>
    <scope>SUBCELLULAR LOCATION</scope>
</reference>
<reference key="77">
    <citation type="journal article" date="2007" name="Nature">
        <title>Atomic structure of a voltage-dependent K+ channel in a lipid membrane-like environment.</title>
        <authorList>
            <person name="Long S.B."/>
            <person name="Tao X."/>
            <person name="Campbell E.B."/>
            <person name="MacKinnon R."/>
        </authorList>
    </citation>
    <scope>X-RAY CRYSTALLOGRAPHY (2.40 ANGSTROMS) OF 272-304</scope>
</reference>
<reference key="78">
    <citation type="journal article" date="2010" name="Science">
        <title>A gating charge transfer center in voltage sensors.</title>
        <authorList>
            <person name="Tao X."/>
            <person name="Lee A."/>
            <person name="Limapichat W."/>
            <person name="Dougherty D.A."/>
            <person name="MacKinnon R."/>
        </authorList>
    </citation>
    <scope>X-RAY CRYSTALLOGRAPHY (2.90 ANGSTROMS) OF 272-304</scope>
</reference>
<reference key="79">
    <citation type="journal article" date="2013" name="Elife">
        <title>Structure of a pore-blocking toxin in complex with a eukaryotic voltage-dependent K(+) channel.</title>
        <authorList>
            <person name="Banerjee A."/>
            <person name="Lee A."/>
            <person name="Campbell E."/>
            <person name="Mackinnon R."/>
        </authorList>
    </citation>
    <scope>X-RAY CRYSTALLOGRAPHY (2.50 ANGSTROMS) OF 272-304</scope>
</reference>
<keyword id="KW-0002">3D-structure</keyword>
<keyword id="KW-1003">Cell membrane</keyword>
<keyword id="KW-0966">Cell projection</keyword>
<keyword id="KW-0268">Exocytosis</keyword>
<keyword id="KW-0407">Ion channel</keyword>
<keyword id="KW-0406">Ion transport</keyword>
<keyword id="KW-1017">Isopeptide bond</keyword>
<keyword id="KW-0472">Membrane</keyword>
<keyword id="KW-0597">Phosphoprotein</keyword>
<keyword id="KW-0628">Postsynaptic cell membrane</keyword>
<keyword id="KW-0630">Potassium</keyword>
<keyword id="KW-0631">Potassium channel</keyword>
<keyword id="KW-0633">Potassium transport</keyword>
<keyword id="KW-1185">Reference proteome</keyword>
<keyword id="KW-0770">Synapse</keyword>
<keyword id="KW-0771">Synaptosome</keyword>
<keyword id="KW-0812">Transmembrane</keyword>
<keyword id="KW-1133">Transmembrane helix</keyword>
<keyword id="KW-0813">Transport</keyword>
<keyword id="KW-0832">Ubl conjugation</keyword>
<keyword id="KW-0851">Voltage-gated channel</keyword>
<name>KCNB1_RAT</name>
<organism>
    <name type="scientific">Rattus norvegicus</name>
    <name type="common">Rat</name>
    <dbReference type="NCBI Taxonomy" id="10116"/>
    <lineage>
        <taxon>Eukaryota</taxon>
        <taxon>Metazoa</taxon>
        <taxon>Chordata</taxon>
        <taxon>Craniata</taxon>
        <taxon>Vertebrata</taxon>
        <taxon>Euteleostomi</taxon>
        <taxon>Mammalia</taxon>
        <taxon>Eutheria</taxon>
        <taxon>Euarchontoglires</taxon>
        <taxon>Glires</taxon>
        <taxon>Rodentia</taxon>
        <taxon>Myomorpha</taxon>
        <taxon>Muroidea</taxon>
        <taxon>Muridae</taxon>
        <taxon>Murinae</taxon>
        <taxon>Rattus</taxon>
    </lineage>
</organism>
<accession>P15387</accession>
<evidence type="ECO:0000250" key="1">
    <source>
        <dbReference type="UniProtKB" id="P63142"/>
    </source>
</evidence>
<evidence type="ECO:0000250" key="2">
    <source>
        <dbReference type="UniProtKB" id="Q03717"/>
    </source>
</evidence>
<evidence type="ECO:0000250" key="3">
    <source>
        <dbReference type="UniProtKB" id="Q14721"/>
    </source>
</evidence>
<evidence type="ECO:0000255" key="4"/>
<evidence type="ECO:0000256" key="5">
    <source>
        <dbReference type="SAM" id="MobiDB-lite"/>
    </source>
</evidence>
<evidence type="ECO:0000269" key="6">
    <source>
    </source>
</evidence>
<evidence type="ECO:0000269" key="7">
    <source>
    </source>
</evidence>
<evidence type="ECO:0000269" key="8">
    <source>
    </source>
</evidence>
<evidence type="ECO:0000269" key="9">
    <source>
    </source>
</evidence>
<evidence type="ECO:0000269" key="10">
    <source>
    </source>
</evidence>
<evidence type="ECO:0000269" key="11">
    <source>
    </source>
</evidence>
<evidence type="ECO:0000269" key="12">
    <source>
    </source>
</evidence>
<evidence type="ECO:0000269" key="13">
    <source>
    </source>
</evidence>
<evidence type="ECO:0000269" key="14">
    <source>
    </source>
</evidence>
<evidence type="ECO:0000269" key="15">
    <source>
    </source>
</evidence>
<evidence type="ECO:0000269" key="16">
    <source>
    </source>
</evidence>
<evidence type="ECO:0000269" key="17">
    <source>
    </source>
</evidence>
<evidence type="ECO:0000269" key="18">
    <source>
    </source>
</evidence>
<evidence type="ECO:0000269" key="19">
    <source>
    </source>
</evidence>
<evidence type="ECO:0000269" key="20">
    <source>
    </source>
</evidence>
<evidence type="ECO:0000269" key="21">
    <source>
    </source>
</evidence>
<evidence type="ECO:0000269" key="22">
    <source>
    </source>
</evidence>
<evidence type="ECO:0000269" key="23">
    <source>
    </source>
</evidence>
<evidence type="ECO:0000269" key="24">
    <source>
    </source>
</evidence>
<evidence type="ECO:0000269" key="25">
    <source>
    </source>
</evidence>
<evidence type="ECO:0000269" key="26">
    <source>
    </source>
</evidence>
<evidence type="ECO:0000269" key="27">
    <source>
    </source>
</evidence>
<evidence type="ECO:0000269" key="28">
    <source>
    </source>
</evidence>
<evidence type="ECO:0000269" key="29">
    <source>
    </source>
</evidence>
<evidence type="ECO:0000269" key="30">
    <source>
    </source>
</evidence>
<evidence type="ECO:0000269" key="31">
    <source>
    </source>
</evidence>
<evidence type="ECO:0000269" key="32">
    <source>
    </source>
</evidence>
<evidence type="ECO:0000269" key="33">
    <source>
    </source>
</evidence>
<evidence type="ECO:0000269" key="34">
    <source>
    </source>
</evidence>
<evidence type="ECO:0000269" key="35">
    <source>
    </source>
</evidence>
<evidence type="ECO:0000269" key="36">
    <source>
    </source>
</evidence>
<evidence type="ECO:0000269" key="37">
    <source>
    </source>
</evidence>
<evidence type="ECO:0000269" key="38">
    <source>
    </source>
</evidence>
<evidence type="ECO:0000269" key="39">
    <source>
    </source>
</evidence>
<evidence type="ECO:0000269" key="40">
    <source>
    </source>
</evidence>
<evidence type="ECO:0000269" key="41">
    <source>
    </source>
</evidence>
<evidence type="ECO:0000269" key="42">
    <source>
    </source>
</evidence>
<evidence type="ECO:0000269" key="43">
    <source>
    </source>
</evidence>
<evidence type="ECO:0000269" key="44">
    <source>
    </source>
</evidence>
<evidence type="ECO:0000269" key="45">
    <source>
    </source>
</evidence>
<evidence type="ECO:0000269" key="46">
    <source>
    </source>
</evidence>
<evidence type="ECO:0000269" key="47">
    <source>
    </source>
</evidence>
<evidence type="ECO:0000269" key="48">
    <source>
    </source>
</evidence>
<evidence type="ECO:0000269" key="49">
    <source>
    </source>
</evidence>
<evidence type="ECO:0000269" key="50">
    <source>
    </source>
</evidence>
<evidence type="ECO:0000269" key="51">
    <source>
    </source>
</evidence>
<evidence type="ECO:0000269" key="52">
    <source>
    </source>
</evidence>
<evidence type="ECO:0000269" key="53">
    <source>
    </source>
</evidence>
<evidence type="ECO:0000269" key="54">
    <source>
    </source>
</evidence>
<evidence type="ECO:0000269" key="55">
    <source>
    </source>
</evidence>
<evidence type="ECO:0000269" key="56">
    <source>
    </source>
</evidence>
<evidence type="ECO:0000269" key="57">
    <source>
    </source>
</evidence>
<evidence type="ECO:0000269" key="58">
    <source>
    </source>
</evidence>
<evidence type="ECO:0000269" key="59">
    <source>
    </source>
</evidence>
<evidence type="ECO:0000269" key="60">
    <source>
    </source>
</evidence>
<evidence type="ECO:0000269" key="61">
    <source>
    </source>
</evidence>
<evidence type="ECO:0000269" key="62">
    <source>
    </source>
</evidence>
<evidence type="ECO:0000269" key="63">
    <source>
    </source>
</evidence>
<evidence type="ECO:0000269" key="64">
    <source>
    </source>
</evidence>
<evidence type="ECO:0000269" key="65">
    <source>
    </source>
</evidence>
<evidence type="ECO:0000269" key="66">
    <source>
    </source>
</evidence>
<evidence type="ECO:0000269" key="67">
    <source>
    </source>
</evidence>
<evidence type="ECO:0000269" key="68">
    <source>
    </source>
</evidence>
<evidence type="ECO:0000269" key="69">
    <source>
    </source>
</evidence>
<evidence type="ECO:0000269" key="70">
    <source>
    </source>
</evidence>
<evidence type="ECO:0000269" key="71">
    <source>
    </source>
</evidence>
<evidence type="ECO:0000269" key="72">
    <source>
    </source>
</evidence>
<evidence type="ECO:0000269" key="73">
    <source>
    </source>
</evidence>
<evidence type="ECO:0000269" key="74">
    <source>
    </source>
</evidence>
<evidence type="ECO:0000269" key="75">
    <source>
    </source>
</evidence>
<evidence type="ECO:0000269" key="76">
    <source>
    </source>
</evidence>
<evidence type="ECO:0000269" key="77">
    <source>
    </source>
</evidence>
<evidence type="ECO:0000303" key="78">
    <source>
    </source>
</evidence>
<evidence type="ECO:0000305" key="79"/>
<evidence type="ECO:0000305" key="80">
    <source>
    </source>
</evidence>
<evidence type="ECO:0000305" key="81">
    <source>
    </source>
</evidence>
<evidence type="ECO:0000312" key="82">
    <source>
        <dbReference type="RGD" id="2954"/>
    </source>
</evidence>
<evidence type="ECO:0007744" key="83">
    <source>
    </source>
</evidence>
<evidence type="ECO:0007829" key="84">
    <source>
        <dbReference type="PDB" id="4JTA"/>
    </source>
</evidence>
<evidence type="ECO:0007829" key="85">
    <source>
        <dbReference type="PDB" id="8SD3"/>
    </source>
</evidence>
<feature type="chain" id="PRO_0000054046" description="Potassium voltage-gated channel subfamily B member 1">
    <location>
        <begin position="1"/>
        <end position="857"/>
    </location>
</feature>
<feature type="topological domain" description="Cytoplasmic" evidence="1">
    <location>
        <begin position="1"/>
        <end position="186"/>
    </location>
</feature>
<feature type="transmembrane region" description="Helical; Name=Segment S1" evidence="4">
    <location>
        <begin position="187"/>
        <end position="208"/>
    </location>
</feature>
<feature type="topological domain" description="Extracellular" evidence="1">
    <location>
        <begin position="209"/>
        <end position="228"/>
    </location>
</feature>
<feature type="transmembrane region" description="Helical; Name=Segment S2" evidence="4">
    <location>
        <begin position="229"/>
        <end position="250"/>
    </location>
</feature>
<feature type="topological domain" description="Cytoplasmic" evidence="1">
    <location>
        <begin position="251"/>
        <end position="259"/>
    </location>
</feature>
<feature type="transmembrane region" description="Helical; Name=Segment S3" evidence="1">
    <location>
        <begin position="260"/>
        <end position="280"/>
    </location>
</feature>
<feature type="topological domain" description="Extracellular" evidence="1">
    <location>
        <begin position="281"/>
        <end position="294"/>
    </location>
</feature>
<feature type="transmembrane region" description="Helical; Voltage-sensor; Name=Segment S4" evidence="1">
    <location>
        <begin position="295"/>
        <end position="316"/>
    </location>
</feature>
<feature type="topological domain" description="Cytoplasmic" evidence="1">
    <location>
        <begin position="317"/>
        <end position="330"/>
    </location>
</feature>
<feature type="transmembrane region" description="Helical; Name=Segment S5" evidence="1">
    <location>
        <begin position="331"/>
        <end position="351"/>
    </location>
</feature>
<feature type="topological domain" description="Extracellular" evidence="1">
    <location>
        <begin position="352"/>
        <end position="364"/>
    </location>
</feature>
<feature type="intramembrane region" description="Helical; Name=Pore helix" evidence="1">
    <location>
        <begin position="365"/>
        <end position="376"/>
    </location>
</feature>
<feature type="intramembrane region" evidence="1">
    <location>
        <begin position="377"/>
        <end position="384"/>
    </location>
</feature>
<feature type="topological domain" description="Extracellular" evidence="1">
    <location>
        <begin position="385"/>
        <end position="391"/>
    </location>
</feature>
<feature type="transmembrane region" description="Helical; Name=Segment S6" evidence="1">
    <location>
        <begin position="392"/>
        <end position="420"/>
    </location>
</feature>
<feature type="topological domain" description="Cytoplasmic" evidence="1">
    <location>
        <begin position="421"/>
        <end position="857"/>
    </location>
</feature>
<feature type="region of interest" description="Disordered" evidence="5">
    <location>
        <begin position="1"/>
        <end position="21"/>
    </location>
</feature>
<feature type="region of interest" description="Self-association" evidence="37 48">
    <location>
        <begin position="59"/>
        <end position="75"/>
    </location>
</feature>
<feature type="region of interest" description="Self-association" evidence="37 48">
    <location>
        <begin position="448"/>
        <end position="481"/>
    </location>
</feature>
<feature type="region of interest" description="Disordered" evidence="5">
    <location>
        <begin position="476"/>
        <end position="524"/>
    </location>
</feature>
<feature type="region of interest" description="Disordered" evidence="5">
    <location>
        <begin position="540"/>
        <end position="569"/>
    </location>
</feature>
<feature type="region of interest" description="Disordered" evidence="5">
    <location>
        <begin position="610"/>
        <end position="658"/>
    </location>
</feature>
<feature type="region of interest" description="Disordered" evidence="5">
    <location>
        <begin position="770"/>
        <end position="802"/>
    </location>
</feature>
<feature type="region of interest" description="Disordered" evidence="5">
    <location>
        <begin position="818"/>
        <end position="857"/>
    </location>
</feature>
<feature type="short sequence motif" description="Selectivity filter" evidence="1">
    <location>
        <begin position="377"/>
        <end position="382"/>
    </location>
</feature>
<feature type="short sequence motif" description="FFAT" evidence="3">
    <location>
        <begin position="590"/>
        <end position="596"/>
    </location>
</feature>
<feature type="compositionally biased region" description="Basic and acidic residues" evidence="5">
    <location>
        <begin position="504"/>
        <end position="516"/>
    </location>
</feature>
<feature type="compositionally biased region" description="Polar residues" evidence="5">
    <location>
        <begin position="610"/>
        <end position="621"/>
    </location>
</feature>
<feature type="compositionally biased region" description="Polar residues" evidence="5">
    <location>
        <begin position="638"/>
        <end position="649"/>
    </location>
</feature>
<feature type="compositionally biased region" description="Polar residues" evidence="5">
    <location>
        <begin position="770"/>
        <end position="789"/>
    </location>
</feature>
<feature type="compositionally biased region" description="Basic and acidic residues" evidence="5">
    <location>
        <begin position="828"/>
        <end position="838"/>
    </location>
</feature>
<feature type="modified residue" description="Phosphoserine" evidence="27 39">
    <location>
        <position position="15"/>
    </location>
</feature>
<feature type="modified residue" description="Phosphotyrosine; by Src" evidence="16 47">
    <location>
        <position position="128"/>
    </location>
</feature>
<feature type="modified residue" description="Phosphoserine" evidence="2">
    <location>
        <position position="444"/>
    </location>
</feature>
<feature type="modified residue" description="Phosphoserine" evidence="27 29 39">
    <location>
        <position position="457"/>
    </location>
</feature>
<feature type="modified residue" description="Phosphoserine" evidence="27 83">
    <location>
        <position position="484"/>
    </location>
</feature>
<feature type="modified residue" description="Phosphoserine" evidence="27">
    <location>
        <position position="496"/>
    </location>
</feature>
<feature type="modified residue" description="Phosphoserine" evidence="27">
    <location>
        <position position="503"/>
    </location>
</feature>
<feature type="modified residue" description="Phosphoserine" evidence="83">
    <location>
        <position position="519"/>
    </location>
</feature>
<feature type="modified residue" description="Phosphoserine; by CDK5; in vitro" evidence="27 52 83">
    <location>
        <position position="520"/>
    </location>
</feature>
<feature type="modified residue" description="Phosphoserine" evidence="27 39">
    <location>
        <position position="541"/>
    </location>
</feature>
<feature type="modified residue" description="Phosphoserine" evidence="27 29">
    <location>
        <position position="567"/>
    </location>
</feature>
<feature type="modified residue" description="Phosphoserine" evidence="27">
    <location>
        <position position="590"/>
    </location>
</feature>
<feature type="modified residue" description="Phosphoserine" evidence="3">
    <location>
        <position position="593"/>
    </location>
</feature>
<feature type="modified residue" description="Phosphoserine; by CDK5" evidence="27 29 39 52 58">
    <location>
        <position position="607"/>
    </location>
</feature>
<feature type="modified residue" description="Phosphoserine; by CDK5; in vitro" evidence="27 39 52 83">
    <location>
        <position position="655"/>
    </location>
</feature>
<feature type="modified residue" description="Phosphoserine" evidence="27 29 39">
    <location>
        <position position="719"/>
    </location>
</feature>
<feature type="modified residue" description="Phosphoserine" evidence="27">
    <location>
        <position position="771"/>
    </location>
</feature>
<feature type="modified residue" description="Phosphoserine" evidence="27 39">
    <location>
        <position position="799"/>
    </location>
</feature>
<feature type="modified residue" description="Phosphoserine; by CDK5, MAPK14; in vitro" evidence="27 31 39 52">
    <location>
        <position position="804"/>
    </location>
</feature>
<feature type="modified residue" description="Phosphothreonine" evidence="27 39">
    <location>
        <position position="836"/>
    </location>
</feature>
<feature type="cross-link" description="Glycyl lysine isopeptide (Lys-Gly) (interchain with G-Cter in SUMO)" evidence="51">
    <location>
        <position position="474"/>
    </location>
</feature>
<feature type="mutagenesis site" description="Shift in voltage-dependent gating on calcineurin-dependent activation and steady-state inactivation. Additive effect on activation and steady-state inactivation; when associated with A-457." evidence="27">
    <original>S</original>
    <variation>A</variation>
    <location>
        <position position="15"/>
    </location>
</feature>
<feature type="mutagenesis site" description="Resists voltage-dependent gating on calcineurin-dependent activation and steady-state inactivation." evidence="27">
    <original>S</original>
    <variation>D</variation>
    <location>
        <position position="15"/>
    </location>
</feature>
<feature type="mutagenesis site" description="Reduces channel activity." evidence="15">
    <original>Q</original>
    <variation>E</variation>
    <location>
        <position position="71"/>
    </location>
</feature>
<feature type="mutagenesis site" description="No effect on channel activity." evidence="15">
    <original>E</original>
    <variation>D</variation>
    <location>
        <position position="79"/>
    </location>
</feature>
<feature type="mutagenesis site" description="Reduces the increase of plasma membrane insertion and apoptotic enhancement of potassium current during cell death program. Significant loss of Src-mediated phosphorylation and channel activity. Reduces interaction with PTPRE. Increases cell viability against apoptotic insults. Abolishes the increase of plasma membrane insertion and apoptotic enhancement of potassium current during cell death program; when associated with D-804." evidence="16 47">
    <original>Y</original>
    <variation>F</variation>
    <location>
        <position position="128"/>
    </location>
</feature>
<feature type="mutagenesis site" description="No loss of SUMO-dependent channel activity modulation in hippocampal neurons." evidence="51">
    <original>K</original>
    <variation>Q</variation>
    <location>
        <position position="149"/>
    </location>
</feature>
<feature type="mutagenesis site" description="No loss of SUMO-dependent channel activity modulation in hippocampal neurons." evidence="51">
    <original>K</original>
    <variation>Q</variation>
    <location>
        <position position="259"/>
    </location>
</feature>
<feature type="mutagenesis site" description="Reduces channel activity. Does not inhibit membrane plasma subcellular localization, interaction with STX1A, pore-independent exocytosis activity and apoptotic enhancement of potassium current during cell death program; when associated with T-384." evidence="14 19 30 31 49 50 55">
    <original>W</original>
    <variation>C</variation>
    <location>
        <position position="369"/>
    </location>
</feature>
<feature type="mutagenesis site" description="Reduces channel activity. Does not inhibit membrane plasma subcellular localization, interaction with STX1A, pore-independent exocytosis activity and apoptotic enhancement of potassium current during cell death program; when associated with C-369." evidence="14 19 30 49 50 55">
    <original>Y</original>
    <variation>T</variation>
    <location>
        <position position="384"/>
    </location>
</feature>
<feature type="mutagenesis site" description="No effect on Src-mediated phosphorylation." evidence="72">
    <original>S</original>
    <variation>A</variation>
    <location>
        <position position="444"/>
    </location>
</feature>
<feature type="mutagenesis site" description="Shift in voltage-dependent gating on calcineurin-dependent activation and steady-state inactivation. Additive effect on activation and steady-state inactivation; when associated with A-15." evidence="27">
    <original>S</original>
    <variation>A</variation>
    <location>
        <position position="457"/>
    </location>
</feature>
<feature type="mutagenesis site" description="Resists voltage-dependent gating on calcineurin-dependent activation and steady-state inactivation." evidence="27">
    <original>S</original>
    <variation>D</variation>
    <location>
        <position position="457"/>
    </location>
</feature>
<feature type="mutagenesis site" description="Loss of SUMO-dependent channel activity modulation in hippocampal neurons." evidence="51">
    <original>K</original>
    <variation>Q</variation>
    <location>
        <position position="474"/>
    </location>
</feature>
<feature type="mutagenesis site" description="Shift in voltage-dependent gating on calcineurin-dependent activation and steady-state inactivation." evidence="27">
    <original>S</original>
    <variation>A</variation>
    <location>
        <position position="484"/>
    </location>
</feature>
<feature type="mutagenesis site" description="Resists voltage-dependent gating on calcineurin-dependent activation and steady-state inactivation." evidence="27">
    <original>S</original>
    <variation>D</variation>
    <location>
        <position position="484"/>
    </location>
</feature>
<feature type="mutagenesis site" description="No effect on Src-mediated phosphorylation." evidence="72">
    <original>S</original>
    <variation>A</variation>
    <location>
        <position position="496"/>
    </location>
</feature>
<feature type="mutagenesis site" description="Shift in voltage-dependent gating on calcineurin-dependent activation and steady-state inactivation." evidence="27">
    <original>S</original>
    <variation>A</variation>
    <location>
        <position position="541"/>
    </location>
</feature>
<feature type="mutagenesis site" description="Resists voltage-dependent gating on calcineurin-dependent activation and steady-state inactivation." evidence="27">
    <original>S</original>
    <variation>D</variation>
    <location>
        <position position="541"/>
    </location>
</feature>
<feature type="mutagenesis site" description="Shift in voltage-dependent gating on calcineurin-dependent activation and steady-state inactivation. Larger effect on activation and steady-state inactivation; when associated with A-607." evidence="27">
    <original>S</original>
    <variation>A</variation>
    <location>
        <position position="567"/>
    </location>
</feature>
<feature type="mutagenesis site" description="Resists voltage-dependent gating on calcineurin-dependent activation and steady-state inactivation." evidence="27">
    <original>S</original>
    <variation>D</variation>
    <location>
        <position position="567"/>
    </location>
</feature>
<feature type="mutagenesis site" description="Abolishes clustered subcellular distribution in neurons." evidence="9">
    <original>S</original>
    <variation>A</variation>
    <location>
        <position position="587"/>
    </location>
</feature>
<feature type="mutagenesis site" description="Abolishes clustered subcellular distribution in neurons. Does not affect KCNB1-containing vesicles motility." evidence="9 59">
    <original>S</original>
    <variation>A</variation>
    <location>
        <position position="590"/>
    </location>
</feature>
<feature type="mutagenesis site" description="Abolishes clustered subcellular distribution in neurons." evidence="9">
    <original>F</original>
    <variation>A</variation>
    <location>
        <position position="591"/>
    </location>
</feature>
<feature type="mutagenesis site" description="Abolishes clustered subcellular distribution in neurons." evidence="9">
    <original>S</original>
    <variation>A</variation>
    <location>
        <position position="593"/>
    </location>
</feature>
<feature type="mutagenesis site" description="Shift in voltage-dependent gating on calcineurin-dependent activation and steady-state inactivation. Larger effect on activation and steady-state inactivation; when associated with A-567." evidence="27">
    <original>S</original>
    <variation>A</variation>
    <location>
        <position position="607"/>
    </location>
</feature>
<feature type="mutagenesis site" description="Resists voltage-dependent gating on calcineurin-dependent activation and steady-state inactivation." evidence="27">
    <original>S</original>
    <variation>D</variation>
    <location>
        <position position="607"/>
    </location>
</feature>
<feature type="mutagenesis site" description="Shift in voltage-dependent gating on calcineurin-dependent activation and steady-state inactivation." evidence="27">
    <original>S</original>
    <variation>A</variation>
    <location>
        <position position="655"/>
    </location>
</feature>
<feature type="mutagenesis site" description="Resists voltage-dependent gating on calcineurin-dependent activation and steady-state inactivation." evidence="27">
    <original>S</original>
    <variation>D</variation>
    <location>
        <position position="655"/>
    </location>
</feature>
<feature type="mutagenesis site" description="Shift in voltage-dependent gating on calcineurin-dependent activation and steady-state inactivation." evidence="27">
    <original>S</original>
    <variation>A</variation>
    <location>
        <position position="719"/>
    </location>
</feature>
<feature type="mutagenesis site" description="Resists voltage-dependent gating on calcineurin-dependent activation and steady-state inactivation." evidence="27">
    <original>S</original>
    <variation>D</variation>
    <location>
        <position position="719"/>
    </location>
</feature>
<feature type="mutagenesis site" description="Shift in voltage-dependent gating on calcineurin-dependent activation and steady-state inactivation." evidence="27">
    <original>S</original>
    <variation>A</variation>
    <location>
        <position position="771"/>
    </location>
</feature>
<feature type="mutagenesis site" description="Resists voltage-dependent gating on calcineurin-dependent activation and steady-state inactivation." evidence="27">
    <original>S</original>
    <variation>D</variation>
    <location>
        <position position="771"/>
    </location>
</feature>
<feature type="mutagenesis site" description="Reduces the increase of plasma membrane insertion and apoptotic enhancement of potassium current during cell death program. No change in calcineurin-dependent regulation of voltage-dependent gating. Abolishes the increase of plasma membrane insertion and apoptotic enhancement of potassium current during cell death program; when associated with F-128." evidence="27 31 47">
    <original>S</original>
    <variation>A</variation>
    <location>
        <position position="804"/>
    </location>
</feature>
<feature type="mutagenesis site" description="Does not reduce apoptotic enhancement of potassium current during the cell death program." evidence="31">
    <original>S</original>
    <variation>D</variation>
    <location>
        <position position="804"/>
    </location>
</feature>
<feature type="helix" evidence="85">
    <location>
        <begin position="177"/>
        <end position="180"/>
    </location>
</feature>
<feature type="helix" evidence="85">
    <location>
        <begin position="182"/>
        <end position="184"/>
    </location>
</feature>
<feature type="helix" evidence="85">
    <location>
        <begin position="186"/>
        <end position="208"/>
    </location>
</feature>
<feature type="turn" evidence="85">
    <location>
        <begin position="212"/>
        <end position="214"/>
    </location>
</feature>
<feature type="helix" evidence="85">
    <location>
        <begin position="229"/>
        <end position="249"/>
    </location>
</feature>
<feature type="helix" evidence="85">
    <location>
        <begin position="256"/>
        <end position="259"/>
    </location>
</feature>
<feature type="helix" evidence="85">
    <location>
        <begin position="261"/>
        <end position="268"/>
    </location>
</feature>
<feature type="helix" evidence="84">
    <location>
        <begin position="274"/>
        <end position="281"/>
    </location>
</feature>
<feature type="helix" evidence="84">
    <location>
        <begin position="286"/>
        <end position="302"/>
    </location>
</feature>
<feature type="helix" evidence="84">
    <location>
        <begin position="303"/>
        <end position="307"/>
    </location>
</feature>
<feature type="helix" evidence="85">
    <location>
        <begin position="315"/>
        <end position="326"/>
    </location>
</feature>
<feature type="helix" evidence="85">
    <location>
        <begin position="328"/>
        <end position="353"/>
    </location>
</feature>
<feature type="strand" evidence="85">
    <location>
        <begin position="356"/>
        <end position="358"/>
    </location>
</feature>
<feature type="helix" evidence="85">
    <location>
        <begin position="364"/>
        <end position="375"/>
    </location>
</feature>
<feature type="strand" evidence="85">
    <location>
        <begin position="381"/>
        <end position="383"/>
    </location>
</feature>
<feature type="helix" evidence="85">
    <location>
        <begin position="388"/>
        <end position="406"/>
    </location>
</feature>
<feature type="helix" evidence="85">
    <location>
        <begin position="409"/>
        <end position="431"/>
    </location>
</feature>